<sequence length="1721" mass="195422">MAQFPTPFGGSLDIWAITVEERAKHDQQFHSLKPISGFITGDQARNFFFQSGLPQPVLAQIWALADMNNDGRMDQVEFSIAMKLIKLKLQGYQLPSALPPVMKQQPVAISSAPAFGMGGIASMPPLTAVAPVPMGSIPVVGMSPTLVSSVPTAAVPPLANGAPPVIQPLPAFAHPAATLPKSSSFSRSGPGSQLNTKLQKAQSFDVASVPPVAEWAVPQSSRLKYRQLFNSHDKTMSGHLTGPQARTILMQSSLPQAQLASIWNLSDIDQDGKLTAEEFILAMHLIDVAMSGQPLPPVLPPEYIPPSFRRVRSGSGISVISSTSVDQRLPEEPVLEDEQQQLEKKLPVTFEDKKRENFERGNLELEKRRQALLEQQRKEQERLAQLERAEQERKERERQEQERKRQLELEKQLEKQRELERQREEERRKEIERREAAKRELERQRQLEWERNRRQELLNQRNKEQEDIVVLKAKKKTLEFELEALNDKKHQLEGKLQDIRCRLTTQRQEIESTNKSRELRIAEITHLQQQLQESQQMLGRLIPEKQILNDQLKQVQQNSLHRDSLVTLKRALEAKELARQHLRDQLDEVEKETRSKLQEIDIFNNQLKELREIHNKQQLQKQKSMEAERLKQKEQERKIIELEKQKEEAQRRAQERDKQWLEHVQQEDEHQRPRKLHEEEKLKREESVKKKDGEEKGKQEAQDKLGRLFHQHQEPAKPAVQAPWSTAEKGPLTISAQENVKVVYYRALYPFESRSHDEITIQPGDIVMVKGEWVDESQTGEPGWLGGELKGKTGWFPANYAEKIPENEVPAPVKPVTDSTSAPAPKLALRETPAPLAVTSSEPSTTPNNWADFSSTWPTSTNEKPETDNWDAWAAQPSLTVPSAGQLRQRSAFTPATATGSSPSPVLGQGEKVEGLQAQALYPWRAKKDNHLNFNKNDVITVLEQQDMWWFGEVQGQKGWFPKSYVKLISGPIRKSTSMDSGSSESPASLKRVASPAAKPVVSGEEFIAMYTYESSEQGDLTFQQGDVILVTKKDGDWWTGTVGDKAGVFPSNYVRLKDSEGSGTAGKTGSLGKKPEIAQVIASYTATGPEQLTLAPGQLILIRKKNPGGWWEGELQARGKKRQIGWFPANYVKLLSPGTSKITPTEPPKSTALAAVCQVIGMYDYTAQNDDELAFNKGQIINVLNKEDPDWWKGEVNGQVGLFPSNYVKLTTDMDPSQQWCSDLHLLDMLTPTERKRQGYIHELIVTEENYVNDLQLVTEIFQKPLMESELLTEKEVAMIFVNWKELIMCNIKLLKALRVRKKMSGEKMPVKMIGDILSAQLPHMQPYIRFCSRQLNGAALIQQKTDEAPDFKEFVKRLAMDPRCKGMPLSSFILKPMQRVTRYPLIIKNILENTPENHPDHSHLKHALEKAEELCSQVNEGVREKENSDRLEWIQAHVQCEGLSEQLVFNSVTNCLGPRKFLHSGKLYKAKSNKELYGFLFNDFLLLTQITKPLGSSGTDKVFSPKSNLQYKMYKTPIFLNEVLVKLPTDPSGDEPIFHISHIDRVYTLRAESINERTAWVQKIKAASELYIETEKKKREKAYLVRSQRATGIGRLMVNVVEGIELKPCRSHGKSNPYCEVTMGSQCHITKTIQDTLNPKWNSNCQFFIRDLEQEVLCITVFERDQFSPDDFLGRTEIRVADIKKDQGSKGPVTKCLLLHEVPTGEIVVRLDLQLFDEP</sequence>
<organism>
    <name type="scientific">Homo sapiens</name>
    <name type="common">Human</name>
    <dbReference type="NCBI Taxonomy" id="9606"/>
    <lineage>
        <taxon>Eukaryota</taxon>
        <taxon>Metazoa</taxon>
        <taxon>Chordata</taxon>
        <taxon>Craniata</taxon>
        <taxon>Vertebrata</taxon>
        <taxon>Euteleostomi</taxon>
        <taxon>Mammalia</taxon>
        <taxon>Eutheria</taxon>
        <taxon>Euarchontoglires</taxon>
        <taxon>Primates</taxon>
        <taxon>Haplorrhini</taxon>
        <taxon>Catarrhini</taxon>
        <taxon>Hominidae</taxon>
        <taxon>Homo</taxon>
    </lineage>
</organism>
<proteinExistence type="evidence at protein level"/>
<protein>
    <recommendedName>
        <fullName evidence="40">Intersectin-1</fullName>
    </recommendedName>
    <alternativeName>
        <fullName evidence="36">SH3 domain-containing protein 1A</fullName>
    </alternativeName>
    <alternativeName>
        <fullName>SH3P17</fullName>
    </alternativeName>
</protein>
<gene>
    <name evidence="42" type="primary">ITSN1</name>
    <name evidence="30 38" type="synonym">ITSN</name>
    <name evidence="36" type="synonym">SH3D1A</name>
</gene>
<name>ITSN1_HUMAN</name>
<keyword id="KW-0002">3D-structure</keyword>
<keyword id="KW-0025">Alternative splicing</keyword>
<keyword id="KW-0106">Calcium</keyword>
<keyword id="KW-1003">Cell membrane</keyword>
<keyword id="KW-0966">Cell projection</keyword>
<keyword id="KW-0168">Coated pit</keyword>
<keyword id="KW-0175">Coiled coil</keyword>
<keyword id="KW-0963">Cytoplasm</keyword>
<keyword id="KW-0968">Cytoplasmic vesicle</keyword>
<keyword id="KW-0254">Endocytosis</keyword>
<keyword id="KW-0967">Endosome</keyword>
<keyword id="KW-0268">Exocytosis</keyword>
<keyword id="KW-0945">Host-virus interaction</keyword>
<keyword id="KW-0472">Membrane</keyword>
<keyword id="KW-0479">Metal-binding</keyword>
<keyword id="KW-0539">Nucleus</keyword>
<keyword id="KW-0597">Phosphoprotein</keyword>
<keyword id="KW-0653">Protein transport</keyword>
<keyword id="KW-1267">Proteomics identification</keyword>
<keyword id="KW-1185">Reference proteome</keyword>
<keyword id="KW-0677">Repeat</keyword>
<keyword id="KW-0728">SH3 domain</keyword>
<keyword id="KW-0770">Synapse</keyword>
<keyword id="KW-0771">Synaptosome</keyword>
<keyword id="KW-0813">Transport</keyword>
<dbReference type="EMBL" id="AF064244">
    <property type="protein sequence ID" value="AAC78611.1"/>
    <property type="molecule type" value="mRNA"/>
</dbReference>
<dbReference type="EMBL" id="AF064247">
    <property type="protein sequence ID" value="AAC80437.1"/>
    <property type="molecule type" value="Genomic_DNA"/>
</dbReference>
<dbReference type="EMBL" id="AF064245">
    <property type="protein sequence ID" value="AAC80437.1"/>
    <property type="status" value="JOINED"/>
    <property type="molecule type" value="Genomic_DNA"/>
</dbReference>
<dbReference type="EMBL" id="AF064246">
    <property type="protein sequence ID" value="AAC80437.1"/>
    <property type="status" value="JOINED"/>
    <property type="molecule type" value="Genomic_DNA"/>
</dbReference>
<dbReference type="EMBL" id="AF064243">
    <property type="protein sequence ID" value="AAC78610.1"/>
    <property type="molecule type" value="mRNA"/>
</dbReference>
<dbReference type="EMBL" id="AF114488">
    <property type="protein sequence ID" value="AAD29953.1"/>
    <property type="molecule type" value="mRNA"/>
</dbReference>
<dbReference type="EMBL" id="AF114487">
    <property type="protein sequence ID" value="AAD29952.1"/>
    <property type="molecule type" value="mRNA"/>
</dbReference>
<dbReference type="EMBL" id="DQ679754">
    <property type="protein sequence ID" value="ABG74695.1"/>
    <property type="molecule type" value="mRNA"/>
</dbReference>
<dbReference type="EMBL" id="DQ679756">
    <property type="protein sequence ID" value="ABG74697.1"/>
    <property type="molecule type" value="mRNA"/>
</dbReference>
<dbReference type="EMBL" id="DQ679757">
    <property type="protein sequence ID" value="ABG74698.1"/>
    <property type="molecule type" value="mRNA"/>
</dbReference>
<dbReference type="EMBL" id="EU117382">
    <property type="protein sequence ID" value="ABV21755.1"/>
    <property type="molecule type" value="mRNA"/>
</dbReference>
<dbReference type="EMBL" id="EU140799">
    <property type="protein sequence ID" value="ABV58335.1"/>
    <property type="molecule type" value="mRNA"/>
</dbReference>
<dbReference type="EMBL" id="EU140800">
    <property type="protein sequence ID" value="ABV58336.1"/>
    <property type="molecule type" value="mRNA"/>
</dbReference>
<dbReference type="EMBL" id="EU120733">
    <property type="protein sequence ID" value="ABV24866.1"/>
    <property type="molecule type" value="mRNA"/>
</dbReference>
<dbReference type="EMBL" id="EU120734">
    <property type="protein sequence ID" value="ABV24867.1"/>
    <property type="molecule type" value="mRNA"/>
</dbReference>
<dbReference type="EMBL" id="EU120735">
    <property type="protein sequence ID" value="ABV24868.1"/>
    <property type="molecule type" value="mRNA"/>
</dbReference>
<dbReference type="EMBL" id="EU152331">
    <property type="protein sequence ID" value="ABV69555.1"/>
    <property type="molecule type" value="mRNA"/>
</dbReference>
<dbReference type="EMBL" id="DQ386455">
    <property type="protein sequence ID" value="ABD72328.1"/>
    <property type="molecule type" value="mRNA"/>
</dbReference>
<dbReference type="EMBL" id="AK300274">
    <property type="protein sequence ID" value="BAG62034.1"/>
    <property type="molecule type" value="mRNA"/>
</dbReference>
<dbReference type="EMBL" id="AP000308">
    <property type="status" value="NOT_ANNOTATED_CDS"/>
    <property type="molecule type" value="Genomic_DNA"/>
</dbReference>
<dbReference type="EMBL" id="AP000309">
    <property type="status" value="NOT_ANNOTATED_CDS"/>
    <property type="molecule type" value="Genomic_DNA"/>
</dbReference>
<dbReference type="EMBL" id="AP000310">
    <property type="status" value="NOT_ANNOTATED_CDS"/>
    <property type="molecule type" value="Genomic_DNA"/>
</dbReference>
<dbReference type="EMBL" id="AP000311">
    <property type="status" value="NOT_ANNOTATED_CDS"/>
    <property type="molecule type" value="Genomic_DNA"/>
</dbReference>
<dbReference type="EMBL" id="AP000312">
    <property type="status" value="NOT_ANNOTATED_CDS"/>
    <property type="molecule type" value="Genomic_DNA"/>
</dbReference>
<dbReference type="EMBL" id="AP000313">
    <property type="status" value="NOT_ANNOTATED_CDS"/>
    <property type="molecule type" value="Genomic_DNA"/>
</dbReference>
<dbReference type="EMBL" id="BC117560">
    <property type="protein sequence ID" value="AAI17561.1"/>
    <property type="molecule type" value="mRNA"/>
</dbReference>
<dbReference type="EMBL" id="BC116186">
    <property type="protein sequence ID" value="AAI16187.1"/>
    <property type="molecule type" value="mRNA"/>
</dbReference>
<dbReference type="EMBL" id="U61166">
    <property type="protein sequence ID" value="AAC50592.1"/>
    <property type="status" value="ALT_INIT"/>
    <property type="molecule type" value="mRNA"/>
</dbReference>
<dbReference type="EMBL" id="AF180522">
    <property type="protein sequence ID" value="AAD53183.1"/>
    <property type="molecule type" value="mRNA"/>
</dbReference>
<dbReference type="CCDS" id="CCDS33545.1">
    <molecule id="Q15811-1"/>
</dbReference>
<dbReference type="CCDS" id="CCDS33546.1">
    <molecule id="Q15811-2"/>
</dbReference>
<dbReference type="CCDS" id="CCDS82663.1">
    <molecule id="Q15811-7"/>
</dbReference>
<dbReference type="CCDS" id="CCDS82664.1">
    <molecule id="Q15811-8"/>
</dbReference>
<dbReference type="CCDS" id="CCDS82665.1">
    <molecule id="Q15811-3"/>
</dbReference>
<dbReference type="CCDS" id="CCDS82666.1">
    <molecule id="Q15811-10"/>
</dbReference>
<dbReference type="RefSeq" id="NP_001001132.1">
    <molecule id="Q15811-2"/>
    <property type="nucleotide sequence ID" value="NM_001001132.2"/>
</dbReference>
<dbReference type="RefSeq" id="NP_001317938.1">
    <molecule id="Q15811-7"/>
    <property type="nucleotide sequence ID" value="NM_001331009.2"/>
</dbReference>
<dbReference type="RefSeq" id="NP_001317939.1">
    <molecule id="Q15811-8"/>
    <property type="nucleotide sequence ID" value="NM_001331010.2"/>
</dbReference>
<dbReference type="RefSeq" id="NP_001317940.1">
    <molecule id="Q15811-3"/>
    <property type="nucleotide sequence ID" value="NM_001331011.2"/>
</dbReference>
<dbReference type="RefSeq" id="NP_001317941.1">
    <molecule id="Q15811-10"/>
    <property type="nucleotide sequence ID" value="NM_001331012.2"/>
</dbReference>
<dbReference type="RefSeq" id="NP_003015.2">
    <molecule id="Q15811-1"/>
    <property type="nucleotide sequence ID" value="NM_003024.2"/>
</dbReference>
<dbReference type="RefSeq" id="XP_011527994.1">
    <molecule id="Q15811-12"/>
    <property type="nucleotide sequence ID" value="XM_011529692.3"/>
</dbReference>
<dbReference type="RefSeq" id="XP_011527995.1">
    <molecule id="Q15811-5"/>
    <property type="nucleotide sequence ID" value="XM_011529693.4"/>
</dbReference>
<dbReference type="RefSeq" id="XP_016883917.1">
    <molecule id="Q15811-1"/>
    <property type="nucleotide sequence ID" value="XM_017028428.2"/>
</dbReference>
<dbReference type="RefSeq" id="XP_016883921.1">
    <molecule id="Q15811-9"/>
    <property type="nucleotide sequence ID" value="XM_017028432.3"/>
</dbReference>
<dbReference type="RefSeq" id="XP_016883922.1">
    <molecule id="Q15811-4"/>
    <property type="nucleotide sequence ID" value="XM_017028433.3"/>
</dbReference>
<dbReference type="RefSeq" id="XP_016883929.1">
    <molecule id="Q15811-11"/>
    <property type="nucleotide sequence ID" value="XM_017028440.3"/>
</dbReference>
<dbReference type="RefSeq" id="XP_047296900.1">
    <molecule id="Q15811-7"/>
    <property type="nucleotide sequence ID" value="XM_047440944.1"/>
</dbReference>
<dbReference type="RefSeq" id="XP_047296901.1">
    <molecule id="Q15811-7"/>
    <property type="nucleotide sequence ID" value="XM_047440945.1"/>
</dbReference>
<dbReference type="RefSeq" id="XP_047296902.1">
    <molecule id="Q15811-10"/>
    <property type="nucleotide sequence ID" value="XM_047440946.1"/>
</dbReference>
<dbReference type="RefSeq" id="XP_047296903.1">
    <molecule id="Q15811-3"/>
    <property type="nucleotide sequence ID" value="XM_047440947.1"/>
</dbReference>
<dbReference type="RefSeq" id="XP_047296904.1">
    <molecule id="Q15811-5"/>
    <property type="nucleotide sequence ID" value="XM_047440948.1"/>
</dbReference>
<dbReference type="RefSeq" id="XP_047296906.1">
    <molecule id="Q15811-6"/>
    <property type="nucleotide sequence ID" value="XM_047440950.1"/>
</dbReference>
<dbReference type="RefSeq" id="XP_054180735.1">
    <molecule id="Q15811-1"/>
    <property type="nucleotide sequence ID" value="XM_054324760.1"/>
</dbReference>
<dbReference type="RefSeq" id="XP_054180740.1">
    <molecule id="Q15811-9"/>
    <property type="nucleotide sequence ID" value="XM_054324765.1"/>
</dbReference>
<dbReference type="RefSeq" id="XP_054180741.1">
    <molecule id="Q15811-4"/>
    <property type="nucleotide sequence ID" value="XM_054324766.1"/>
</dbReference>
<dbReference type="RefSeq" id="XP_054180745.1">
    <molecule id="Q15811-7"/>
    <property type="nucleotide sequence ID" value="XM_054324770.1"/>
</dbReference>
<dbReference type="RefSeq" id="XP_054180746.1">
    <molecule id="Q15811-7"/>
    <property type="nucleotide sequence ID" value="XM_054324771.1"/>
</dbReference>
<dbReference type="RefSeq" id="XP_054180749.1">
    <molecule id="Q15811-10"/>
    <property type="nucleotide sequence ID" value="XM_054324774.1"/>
</dbReference>
<dbReference type="RefSeq" id="XP_054180750.1">
    <molecule id="Q15811-3"/>
    <property type="nucleotide sequence ID" value="XM_054324775.1"/>
</dbReference>
<dbReference type="RefSeq" id="XP_054180751.1">
    <molecule id="Q15811-11"/>
    <property type="nucleotide sequence ID" value="XM_054324776.1"/>
</dbReference>
<dbReference type="RefSeq" id="XP_054180752.1">
    <molecule id="Q15811-12"/>
    <property type="nucleotide sequence ID" value="XM_054324777.1"/>
</dbReference>
<dbReference type="RefSeq" id="XP_054180754.1">
    <molecule id="Q15811-5"/>
    <property type="nucleotide sequence ID" value="XM_054324779.1"/>
</dbReference>
<dbReference type="RefSeq" id="XP_054180755.1">
    <molecule id="Q15811-5"/>
    <property type="nucleotide sequence ID" value="XM_054324780.1"/>
</dbReference>
<dbReference type="RefSeq" id="XP_054180757.1">
    <molecule id="Q15811-6"/>
    <property type="nucleotide sequence ID" value="XM_054324782.1"/>
</dbReference>
<dbReference type="PDB" id="1KI1">
    <property type="method" value="X-ray"/>
    <property type="resolution" value="2.30 A"/>
    <property type="chains" value="B/D=1229-1581"/>
</dbReference>
<dbReference type="PDB" id="2KGR">
    <property type="method" value="NMR"/>
    <property type="chains" value="A=210-312"/>
</dbReference>
<dbReference type="PDB" id="2KHN">
    <property type="method" value="NMR"/>
    <property type="chains" value="A=1-111"/>
</dbReference>
<dbReference type="PDB" id="3FIA">
    <property type="method" value="X-ray"/>
    <property type="resolution" value="1.45 A"/>
    <property type="chains" value="A=1-111"/>
</dbReference>
<dbReference type="PDB" id="3QBV">
    <property type="method" value="X-ray"/>
    <property type="resolution" value="2.65 A"/>
    <property type="chains" value="B/D=1229-1579"/>
</dbReference>
<dbReference type="PDB" id="4IIM">
    <property type="method" value="X-ray"/>
    <property type="resolution" value="1.80 A"/>
    <property type="chains" value="A/B=916-970"/>
</dbReference>
<dbReference type="PDB" id="5HZI">
    <property type="method" value="X-ray"/>
    <property type="resolution" value="2.60 A"/>
    <property type="chains" value="A/B=1230-1580"/>
</dbReference>
<dbReference type="PDB" id="5HZJ">
    <property type="method" value="X-ray"/>
    <property type="resolution" value="2.60 A"/>
    <property type="chains" value="A/B=1230-1580"/>
</dbReference>
<dbReference type="PDB" id="5HZK">
    <property type="method" value="X-ray"/>
    <property type="resolution" value="3.30 A"/>
    <property type="chains" value="B/D=1230-1580"/>
</dbReference>
<dbReference type="PDB" id="6GBU">
    <property type="method" value="X-ray"/>
    <property type="resolution" value="3.44 A"/>
    <property type="chains" value="B/D/F/H=1074-1138"/>
</dbReference>
<dbReference type="PDB" id="6H5T">
    <property type="method" value="X-ray"/>
    <property type="resolution" value="1.69 A"/>
    <property type="chains" value="A/B=741-840"/>
</dbReference>
<dbReference type="PDBsum" id="1KI1"/>
<dbReference type="PDBsum" id="2KGR"/>
<dbReference type="PDBsum" id="2KHN"/>
<dbReference type="PDBsum" id="3FIA"/>
<dbReference type="PDBsum" id="3QBV"/>
<dbReference type="PDBsum" id="4IIM"/>
<dbReference type="PDBsum" id="5HZI"/>
<dbReference type="PDBsum" id="5HZJ"/>
<dbReference type="PDBsum" id="5HZK"/>
<dbReference type="PDBsum" id="6GBU"/>
<dbReference type="PDBsum" id="6H5T"/>
<dbReference type="SMR" id="Q15811"/>
<dbReference type="BioGRID" id="112351">
    <property type="interactions" value="281"/>
</dbReference>
<dbReference type="DIP" id="DIP-33609N"/>
<dbReference type="FunCoup" id="Q15811">
    <property type="interactions" value="2774"/>
</dbReference>
<dbReference type="IntAct" id="Q15811">
    <property type="interactions" value="151"/>
</dbReference>
<dbReference type="MINT" id="Q15811"/>
<dbReference type="STRING" id="9606.ENSP00000370719"/>
<dbReference type="ChEMBL" id="CHEMBL4523302"/>
<dbReference type="GlyGen" id="Q15811">
    <property type="glycosylation" value="1 site, 1 O-linked glycan (1 site)"/>
</dbReference>
<dbReference type="iPTMnet" id="Q15811"/>
<dbReference type="PhosphoSitePlus" id="Q15811"/>
<dbReference type="BioMuta" id="ITSN1"/>
<dbReference type="DMDM" id="116242596"/>
<dbReference type="jPOST" id="Q15811"/>
<dbReference type="MassIVE" id="Q15811"/>
<dbReference type="PaxDb" id="9606-ENSP00000370719"/>
<dbReference type="PeptideAtlas" id="Q15811"/>
<dbReference type="ProteomicsDB" id="17792"/>
<dbReference type="ProteomicsDB" id="1818"/>
<dbReference type="ProteomicsDB" id="1824"/>
<dbReference type="ProteomicsDB" id="1825"/>
<dbReference type="ProteomicsDB" id="1827"/>
<dbReference type="ProteomicsDB" id="5114"/>
<dbReference type="ProteomicsDB" id="60768">
    <molecule id="Q15811-1"/>
</dbReference>
<dbReference type="ProteomicsDB" id="60769">
    <molecule id="Q15811-2"/>
</dbReference>
<dbReference type="ProteomicsDB" id="60770">
    <molecule id="Q15811-3"/>
</dbReference>
<dbReference type="ProteomicsDB" id="60771">
    <molecule id="Q15811-4"/>
</dbReference>
<dbReference type="Pumba" id="Q15811"/>
<dbReference type="ABCD" id="Q15811">
    <property type="antibodies" value="2 sequenced antibodies"/>
</dbReference>
<dbReference type="Antibodypedia" id="7532">
    <property type="antibodies" value="83 antibodies from 19 providers"/>
</dbReference>
<dbReference type="DNASU" id="6453"/>
<dbReference type="Ensembl" id="ENST00000381291.8">
    <molecule id="Q15811-2"/>
    <property type="protein sequence ID" value="ENSP00000370691.4"/>
    <property type="gene ID" value="ENSG00000205726.15"/>
</dbReference>
<dbReference type="Ensembl" id="ENST00000381318.8">
    <molecule id="Q15811-1"/>
    <property type="protein sequence ID" value="ENSP00000370719.3"/>
    <property type="gene ID" value="ENSG00000205726.15"/>
</dbReference>
<dbReference type="Ensembl" id="ENST00000399338.8">
    <molecule id="Q15811-5"/>
    <property type="protein sequence ID" value="ENSP00000382275.4"/>
    <property type="gene ID" value="ENSG00000205726.15"/>
</dbReference>
<dbReference type="Ensembl" id="ENST00000399349.5">
    <molecule id="Q15811-3"/>
    <property type="protein sequence ID" value="ENSP00000382286.1"/>
    <property type="gene ID" value="ENSG00000205726.15"/>
</dbReference>
<dbReference type="Ensembl" id="ENST00000399352.5">
    <molecule id="Q15811-7"/>
    <property type="protein sequence ID" value="ENSP00000382289.1"/>
    <property type="gene ID" value="ENSG00000205726.15"/>
</dbReference>
<dbReference type="Ensembl" id="ENST00000399353.5">
    <molecule id="Q15811-10"/>
    <property type="protein sequence ID" value="ENSP00000382290.1"/>
    <property type="gene ID" value="ENSG00000205726.15"/>
</dbReference>
<dbReference type="Ensembl" id="ENST00000399367.7">
    <molecule id="Q15811-8"/>
    <property type="protein sequence ID" value="ENSP00000382301.3"/>
    <property type="gene ID" value="ENSG00000205726.15"/>
</dbReference>
<dbReference type="GeneID" id="6453"/>
<dbReference type="KEGG" id="hsa:6453"/>
<dbReference type="MANE-Select" id="ENST00000381318.8">
    <property type="protein sequence ID" value="ENSP00000370719.3"/>
    <property type="RefSeq nucleotide sequence ID" value="NM_003024.3"/>
    <property type="RefSeq protein sequence ID" value="NP_003015.2"/>
</dbReference>
<dbReference type="UCSC" id="uc002ysw.4">
    <molecule id="Q15811-1"/>
    <property type="organism name" value="human"/>
</dbReference>
<dbReference type="AGR" id="HGNC:6183"/>
<dbReference type="CTD" id="6453"/>
<dbReference type="DisGeNET" id="6453"/>
<dbReference type="GeneCards" id="ITSN1"/>
<dbReference type="HGNC" id="HGNC:6183">
    <property type="gene designation" value="ITSN1"/>
</dbReference>
<dbReference type="HPA" id="ENSG00000205726">
    <property type="expression patterns" value="Low tissue specificity"/>
</dbReference>
<dbReference type="MalaCards" id="ITSN1"/>
<dbReference type="MIM" id="602442">
    <property type="type" value="gene"/>
</dbReference>
<dbReference type="neXtProt" id="NX_Q15811"/>
<dbReference type="OpenTargets" id="ENSG00000205726"/>
<dbReference type="Orphanet" id="178469">
    <property type="disease" value="Autosomal dominant non-syndromic intellectual disability"/>
</dbReference>
<dbReference type="PharmGKB" id="PA29981"/>
<dbReference type="VEuPathDB" id="HostDB:ENSG00000205726"/>
<dbReference type="eggNOG" id="KOG1029">
    <property type="taxonomic scope" value="Eukaryota"/>
</dbReference>
<dbReference type="eggNOG" id="KOG4305">
    <property type="taxonomic scope" value="Eukaryota"/>
</dbReference>
<dbReference type="GeneTree" id="ENSGT00940000157065"/>
<dbReference type="HOGENOM" id="CLU_002819_0_0_1"/>
<dbReference type="InParanoid" id="Q15811"/>
<dbReference type="OMA" id="XCSDLHL"/>
<dbReference type="OrthoDB" id="2015333at2759"/>
<dbReference type="PAN-GO" id="Q15811">
    <property type="GO annotations" value="8 GO annotations based on evolutionary models"/>
</dbReference>
<dbReference type="PhylomeDB" id="Q15811"/>
<dbReference type="TreeFam" id="TF324293"/>
<dbReference type="PathwayCommons" id="Q15811"/>
<dbReference type="Reactome" id="R-HSA-193648">
    <property type="pathway name" value="NRAGE signals death through JNK"/>
</dbReference>
<dbReference type="Reactome" id="R-HSA-3928662">
    <property type="pathway name" value="EPHB-mediated forward signaling"/>
</dbReference>
<dbReference type="Reactome" id="R-HSA-416482">
    <property type="pathway name" value="G alpha (12/13) signalling events"/>
</dbReference>
<dbReference type="Reactome" id="R-HSA-8856825">
    <property type="pathway name" value="Cargo recognition for clathrin-mediated endocytosis"/>
</dbReference>
<dbReference type="Reactome" id="R-HSA-8856828">
    <property type="pathway name" value="Clathrin-mediated endocytosis"/>
</dbReference>
<dbReference type="Reactome" id="R-HSA-9013148">
    <property type="pathway name" value="CDC42 GTPase cycle"/>
</dbReference>
<dbReference type="Reactome" id="R-HSA-9013406">
    <property type="pathway name" value="RHOQ GTPase cycle"/>
</dbReference>
<dbReference type="Reactome" id="R-HSA-9013408">
    <property type="pathway name" value="RHOG GTPase cycle"/>
</dbReference>
<dbReference type="SignaLink" id="Q15811"/>
<dbReference type="SIGNOR" id="Q15811"/>
<dbReference type="BioGRID-ORCS" id="6453">
    <property type="hits" value="10 hits in 1159 CRISPR screens"/>
</dbReference>
<dbReference type="CD-CODE" id="C2ED57FB">
    <property type="entry name" value="Synthetic Condensate 000110"/>
</dbReference>
<dbReference type="CD-CODE" id="FB4E32DD">
    <property type="entry name" value="Presynaptic clusters and postsynaptic densities"/>
</dbReference>
<dbReference type="ChiTaRS" id="ITSN1">
    <property type="organism name" value="human"/>
</dbReference>
<dbReference type="EvolutionaryTrace" id="Q15811"/>
<dbReference type="GeneWiki" id="ITSN1"/>
<dbReference type="GenomeRNAi" id="6453"/>
<dbReference type="Pharos" id="Q15811">
    <property type="development level" value="Tbio"/>
</dbReference>
<dbReference type="PRO" id="PR:Q15811"/>
<dbReference type="Proteomes" id="UP000005640">
    <property type="component" value="Chromosome 21"/>
</dbReference>
<dbReference type="RNAct" id="Q15811">
    <property type="molecule type" value="protein"/>
</dbReference>
<dbReference type="Bgee" id="ENSG00000205726">
    <property type="expression patterns" value="Expressed in sural nerve and 210 other cell types or tissues"/>
</dbReference>
<dbReference type="ExpressionAtlas" id="Q15811">
    <property type="expression patterns" value="baseline and differential"/>
</dbReference>
<dbReference type="GO" id="GO:0097440">
    <property type="term" value="C:apical dendrite"/>
    <property type="evidence" value="ECO:0007669"/>
    <property type="project" value="Ensembl"/>
</dbReference>
<dbReference type="GO" id="GO:0005905">
    <property type="term" value="C:clathrin-coated pit"/>
    <property type="evidence" value="ECO:0000314"/>
    <property type="project" value="UniProtKB"/>
</dbReference>
<dbReference type="GO" id="GO:0005737">
    <property type="term" value="C:cytoplasm"/>
    <property type="evidence" value="ECO:0000314"/>
    <property type="project" value="UniProtKB"/>
</dbReference>
<dbReference type="GO" id="GO:0005829">
    <property type="term" value="C:cytosol"/>
    <property type="evidence" value="ECO:0000304"/>
    <property type="project" value="Reactome"/>
</dbReference>
<dbReference type="GO" id="GO:0043197">
    <property type="term" value="C:dendritic spine"/>
    <property type="evidence" value="ECO:0007669"/>
    <property type="project" value="Ensembl"/>
</dbReference>
<dbReference type="GO" id="GO:0098978">
    <property type="term" value="C:glutamatergic synapse"/>
    <property type="evidence" value="ECO:0007669"/>
    <property type="project" value="Ensembl"/>
</dbReference>
<dbReference type="GO" id="GO:0097708">
    <property type="term" value="C:intracellular vesicle"/>
    <property type="evidence" value="ECO:0000318"/>
    <property type="project" value="GO_Central"/>
</dbReference>
<dbReference type="GO" id="GO:0030027">
    <property type="term" value="C:lamellipodium"/>
    <property type="evidence" value="ECO:0007669"/>
    <property type="project" value="UniProtKB-SubCell"/>
</dbReference>
<dbReference type="GO" id="GO:0043025">
    <property type="term" value="C:neuronal cell body"/>
    <property type="evidence" value="ECO:0007669"/>
    <property type="project" value="Ensembl"/>
</dbReference>
<dbReference type="GO" id="GO:0005635">
    <property type="term" value="C:nuclear envelope"/>
    <property type="evidence" value="ECO:0000314"/>
    <property type="project" value="UniProtKB"/>
</dbReference>
<dbReference type="GO" id="GO:0005886">
    <property type="term" value="C:plasma membrane"/>
    <property type="evidence" value="ECO:0000314"/>
    <property type="project" value="HPA"/>
</dbReference>
<dbReference type="GO" id="GO:0098871">
    <property type="term" value="C:postsynaptic actin cytoskeleton"/>
    <property type="evidence" value="ECO:0007669"/>
    <property type="project" value="Ensembl"/>
</dbReference>
<dbReference type="GO" id="GO:0098843">
    <property type="term" value="C:postsynaptic endocytic zone"/>
    <property type="evidence" value="ECO:0007669"/>
    <property type="project" value="Ensembl"/>
</dbReference>
<dbReference type="GO" id="GO:0042734">
    <property type="term" value="C:presynaptic membrane"/>
    <property type="evidence" value="ECO:0000318"/>
    <property type="project" value="GO_Central"/>
</dbReference>
<dbReference type="GO" id="GO:0055037">
    <property type="term" value="C:recycling endosome"/>
    <property type="evidence" value="ECO:0007669"/>
    <property type="project" value="UniProtKB-SubCell"/>
</dbReference>
<dbReference type="GO" id="GO:0005509">
    <property type="term" value="F:calcium ion binding"/>
    <property type="evidence" value="ECO:0000303"/>
    <property type="project" value="UniProtKB"/>
</dbReference>
<dbReference type="GO" id="GO:0005085">
    <property type="term" value="F:guanyl-nucleotide exchange factor activity"/>
    <property type="evidence" value="ECO:0000304"/>
    <property type="project" value="Reactome"/>
</dbReference>
<dbReference type="GO" id="GO:0060090">
    <property type="term" value="F:molecular adaptor activity"/>
    <property type="evidence" value="ECO:0000314"/>
    <property type="project" value="UniProtKB"/>
</dbReference>
<dbReference type="GO" id="GO:0070064">
    <property type="term" value="F:proline-rich region binding"/>
    <property type="evidence" value="ECO:0000353"/>
    <property type="project" value="UniProtKB"/>
</dbReference>
<dbReference type="GO" id="GO:0150007">
    <property type="term" value="P:clathrin-dependent synaptic vesicle endocytosis"/>
    <property type="evidence" value="ECO:0000318"/>
    <property type="project" value="GO_Central"/>
</dbReference>
<dbReference type="GO" id="GO:0016197">
    <property type="term" value="P:endosomal transport"/>
    <property type="evidence" value="ECO:0000318"/>
    <property type="project" value="GO_Central"/>
</dbReference>
<dbReference type="GO" id="GO:0006887">
    <property type="term" value="P:exocytosis"/>
    <property type="evidence" value="ECO:0007669"/>
    <property type="project" value="UniProtKB-KW"/>
</dbReference>
<dbReference type="GO" id="GO:0035556">
    <property type="term" value="P:intracellular signal transduction"/>
    <property type="evidence" value="ECO:0007669"/>
    <property type="project" value="InterPro"/>
</dbReference>
<dbReference type="GO" id="GO:2001288">
    <property type="term" value="P:positive regulation of caveolin-mediated endocytosis"/>
    <property type="evidence" value="ECO:0007669"/>
    <property type="project" value="Ensembl"/>
</dbReference>
<dbReference type="GO" id="GO:0060999">
    <property type="term" value="P:positive regulation of dendritic spine development"/>
    <property type="evidence" value="ECO:0007669"/>
    <property type="project" value="Ensembl"/>
</dbReference>
<dbReference type="GO" id="GO:0060124">
    <property type="term" value="P:positive regulation of growth hormone secretion"/>
    <property type="evidence" value="ECO:0007669"/>
    <property type="project" value="Ensembl"/>
</dbReference>
<dbReference type="GO" id="GO:0008104">
    <property type="term" value="P:protein localization"/>
    <property type="evidence" value="ECO:0000315"/>
    <property type="project" value="UniProtKB"/>
</dbReference>
<dbReference type="GO" id="GO:0015031">
    <property type="term" value="P:protein transport"/>
    <property type="evidence" value="ECO:0007669"/>
    <property type="project" value="UniProtKB-KW"/>
</dbReference>
<dbReference type="GO" id="GO:1905274">
    <property type="term" value="P:regulation of modification of postsynaptic actin cytoskeleton"/>
    <property type="evidence" value="ECO:0007669"/>
    <property type="project" value="Ensembl"/>
</dbReference>
<dbReference type="GO" id="GO:0099175">
    <property type="term" value="P:regulation of postsynapse organization"/>
    <property type="evidence" value="ECO:0007669"/>
    <property type="project" value="Ensembl"/>
</dbReference>
<dbReference type="GO" id="GO:0051056">
    <property type="term" value="P:regulation of small GTPase mediated signal transduction"/>
    <property type="evidence" value="ECO:0000304"/>
    <property type="project" value="Reactome"/>
</dbReference>
<dbReference type="CDD" id="cd08375">
    <property type="entry name" value="C2_Intersectin"/>
    <property type="match status" value="1"/>
</dbReference>
<dbReference type="CDD" id="cd00052">
    <property type="entry name" value="EH"/>
    <property type="match status" value="2"/>
</dbReference>
<dbReference type="CDD" id="cd13264">
    <property type="entry name" value="PH_ITSN"/>
    <property type="match status" value="1"/>
</dbReference>
<dbReference type="CDD" id="cd00160">
    <property type="entry name" value="RhoGEF"/>
    <property type="match status" value="1"/>
</dbReference>
<dbReference type="CDD" id="cd11987">
    <property type="entry name" value="SH3_Intersectin1_1"/>
    <property type="match status" value="1"/>
</dbReference>
<dbReference type="CDD" id="cd11989">
    <property type="entry name" value="SH3_Intersectin1_2"/>
    <property type="match status" value="1"/>
</dbReference>
<dbReference type="CDD" id="cd11991">
    <property type="entry name" value="SH3_Intersectin1_3"/>
    <property type="match status" value="1"/>
</dbReference>
<dbReference type="CDD" id="cd11993">
    <property type="entry name" value="SH3_Intersectin1_4"/>
    <property type="match status" value="1"/>
</dbReference>
<dbReference type="CDD" id="cd11995">
    <property type="entry name" value="SH3_Intersectin1_5"/>
    <property type="match status" value="1"/>
</dbReference>
<dbReference type="FunFam" id="1.20.900.10:FF:000011">
    <property type="entry name" value="Intersectin 1"/>
    <property type="match status" value="1"/>
</dbReference>
<dbReference type="FunFam" id="2.30.29.30:FF:000069">
    <property type="entry name" value="Intersectin 1"/>
    <property type="match status" value="1"/>
</dbReference>
<dbReference type="FunFam" id="2.30.30.40:FF:000024">
    <property type="entry name" value="Intersectin 1"/>
    <property type="match status" value="1"/>
</dbReference>
<dbReference type="FunFam" id="2.30.30.40:FF:000041">
    <property type="entry name" value="Intersectin 1"/>
    <property type="match status" value="2"/>
</dbReference>
<dbReference type="FunFam" id="2.60.40.150:FF:000029">
    <property type="entry name" value="Intersectin 1"/>
    <property type="match status" value="1"/>
</dbReference>
<dbReference type="FunFam" id="1.10.238.10:FF:000055">
    <property type="entry name" value="Intersectin-1 isoform 1"/>
    <property type="match status" value="1"/>
</dbReference>
<dbReference type="FunFam" id="1.10.238.10:FF:000046">
    <property type="entry name" value="intersectin-1 isoform X2"/>
    <property type="match status" value="1"/>
</dbReference>
<dbReference type="FunFam" id="2.30.30.40:FF:000122">
    <property type="entry name" value="intersectin-1 isoform X2"/>
    <property type="match status" value="1"/>
</dbReference>
<dbReference type="Gene3D" id="2.60.40.150">
    <property type="entry name" value="C2 domain"/>
    <property type="match status" value="1"/>
</dbReference>
<dbReference type="Gene3D" id="1.20.900.10">
    <property type="entry name" value="Dbl homology (DH) domain"/>
    <property type="match status" value="1"/>
</dbReference>
<dbReference type="Gene3D" id="1.10.238.10">
    <property type="entry name" value="EF-hand"/>
    <property type="match status" value="2"/>
</dbReference>
<dbReference type="Gene3D" id="2.30.29.30">
    <property type="entry name" value="Pleckstrin-homology domain (PH domain)/Phosphotyrosine-binding domain (PTB)"/>
    <property type="match status" value="1"/>
</dbReference>
<dbReference type="Gene3D" id="2.30.30.40">
    <property type="entry name" value="SH3 Domains"/>
    <property type="match status" value="5"/>
</dbReference>
<dbReference type="InterPro" id="IPR000008">
    <property type="entry name" value="C2_dom"/>
</dbReference>
<dbReference type="InterPro" id="IPR035892">
    <property type="entry name" value="C2_domain_sf"/>
</dbReference>
<dbReference type="InterPro" id="IPR035899">
    <property type="entry name" value="DBL_dom_sf"/>
</dbReference>
<dbReference type="InterPro" id="IPR000219">
    <property type="entry name" value="DH_dom"/>
</dbReference>
<dbReference type="InterPro" id="IPR011992">
    <property type="entry name" value="EF-hand-dom_pair"/>
</dbReference>
<dbReference type="InterPro" id="IPR018247">
    <property type="entry name" value="EF_Hand_1_Ca_BS"/>
</dbReference>
<dbReference type="InterPro" id="IPR002048">
    <property type="entry name" value="EF_hand_dom"/>
</dbReference>
<dbReference type="InterPro" id="IPR000261">
    <property type="entry name" value="EH_dom"/>
</dbReference>
<dbReference type="InterPro" id="IPR051480">
    <property type="entry name" value="Endocytic_GEF_Adapter"/>
</dbReference>
<dbReference type="InterPro" id="IPR001331">
    <property type="entry name" value="GDS_CDC24_CS"/>
</dbReference>
<dbReference type="InterPro" id="IPR032140">
    <property type="entry name" value="INTAP"/>
</dbReference>
<dbReference type="InterPro" id="IPR011993">
    <property type="entry name" value="PH-like_dom_sf"/>
</dbReference>
<dbReference type="InterPro" id="IPR001849">
    <property type="entry name" value="PH_domain"/>
</dbReference>
<dbReference type="InterPro" id="IPR036028">
    <property type="entry name" value="SH3-like_dom_sf"/>
</dbReference>
<dbReference type="InterPro" id="IPR001452">
    <property type="entry name" value="SH3_domain"/>
</dbReference>
<dbReference type="PANTHER" id="PTHR46006:SF9">
    <property type="entry name" value="INTERSECTIN-1"/>
    <property type="match status" value="1"/>
</dbReference>
<dbReference type="PANTHER" id="PTHR46006">
    <property type="entry name" value="RHO GUANINE NUCLEOTIDE EXCHANGE FACTOR AT 64C, ISOFORM A"/>
    <property type="match status" value="1"/>
</dbReference>
<dbReference type="Pfam" id="PF00168">
    <property type="entry name" value="C2"/>
    <property type="match status" value="1"/>
</dbReference>
<dbReference type="Pfam" id="PF12763">
    <property type="entry name" value="EH"/>
    <property type="match status" value="2"/>
</dbReference>
<dbReference type="Pfam" id="PF16617">
    <property type="entry name" value="INTAP"/>
    <property type="match status" value="1"/>
</dbReference>
<dbReference type="Pfam" id="PF16652">
    <property type="entry name" value="PH_13"/>
    <property type="match status" value="1"/>
</dbReference>
<dbReference type="Pfam" id="PF00621">
    <property type="entry name" value="RhoGEF"/>
    <property type="match status" value="1"/>
</dbReference>
<dbReference type="Pfam" id="PF00018">
    <property type="entry name" value="SH3_1"/>
    <property type="match status" value="3"/>
</dbReference>
<dbReference type="Pfam" id="PF07653">
    <property type="entry name" value="SH3_2"/>
    <property type="match status" value="1"/>
</dbReference>
<dbReference type="Pfam" id="PF14604">
    <property type="entry name" value="SH3_9"/>
    <property type="match status" value="1"/>
</dbReference>
<dbReference type="PRINTS" id="PR00499">
    <property type="entry name" value="P67PHOX"/>
</dbReference>
<dbReference type="PRINTS" id="PR00452">
    <property type="entry name" value="SH3DOMAIN"/>
</dbReference>
<dbReference type="SMART" id="SM00239">
    <property type="entry name" value="C2"/>
    <property type="match status" value="1"/>
</dbReference>
<dbReference type="SMART" id="SM00054">
    <property type="entry name" value="EFh"/>
    <property type="match status" value="2"/>
</dbReference>
<dbReference type="SMART" id="SM00027">
    <property type="entry name" value="EH"/>
    <property type="match status" value="2"/>
</dbReference>
<dbReference type="SMART" id="SM00233">
    <property type="entry name" value="PH"/>
    <property type="match status" value="1"/>
</dbReference>
<dbReference type="SMART" id="SM00325">
    <property type="entry name" value="RhoGEF"/>
    <property type="match status" value="1"/>
</dbReference>
<dbReference type="SMART" id="SM00326">
    <property type="entry name" value="SH3"/>
    <property type="match status" value="5"/>
</dbReference>
<dbReference type="SUPFAM" id="SSF49562">
    <property type="entry name" value="C2 domain (Calcium/lipid-binding domain, CaLB)"/>
    <property type="match status" value="1"/>
</dbReference>
<dbReference type="SUPFAM" id="SSF48065">
    <property type="entry name" value="DBL homology domain (DH-domain)"/>
    <property type="match status" value="1"/>
</dbReference>
<dbReference type="SUPFAM" id="SSF47473">
    <property type="entry name" value="EF-hand"/>
    <property type="match status" value="2"/>
</dbReference>
<dbReference type="SUPFAM" id="SSF50729">
    <property type="entry name" value="PH domain-like"/>
    <property type="match status" value="1"/>
</dbReference>
<dbReference type="SUPFAM" id="SSF50044">
    <property type="entry name" value="SH3-domain"/>
    <property type="match status" value="5"/>
</dbReference>
<dbReference type="PROSITE" id="PS50004">
    <property type="entry name" value="C2"/>
    <property type="match status" value="1"/>
</dbReference>
<dbReference type="PROSITE" id="PS00741">
    <property type="entry name" value="DH_1"/>
    <property type="match status" value="1"/>
</dbReference>
<dbReference type="PROSITE" id="PS50010">
    <property type="entry name" value="DH_2"/>
    <property type="match status" value="1"/>
</dbReference>
<dbReference type="PROSITE" id="PS00018">
    <property type="entry name" value="EF_HAND_1"/>
    <property type="match status" value="2"/>
</dbReference>
<dbReference type="PROSITE" id="PS50222">
    <property type="entry name" value="EF_HAND_2"/>
    <property type="match status" value="2"/>
</dbReference>
<dbReference type="PROSITE" id="PS50031">
    <property type="entry name" value="EH"/>
    <property type="match status" value="2"/>
</dbReference>
<dbReference type="PROSITE" id="PS50003">
    <property type="entry name" value="PH_DOMAIN"/>
    <property type="match status" value="1"/>
</dbReference>
<dbReference type="PROSITE" id="PS50002">
    <property type="entry name" value="SH3"/>
    <property type="match status" value="5"/>
</dbReference>
<evidence type="ECO:0000250" key="1"/>
<evidence type="ECO:0000250" key="2">
    <source>
        <dbReference type="UniProtKB" id="Q9WVE9"/>
    </source>
</evidence>
<evidence type="ECO:0000250" key="3">
    <source>
        <dbReference type="UniProtKB" id="Q9Z0R4"/>
    </source>
</evidence>
<evidence type="ECO:0000255" key="4"/>
<evidence type="ECO:0000255" key="5">
    <source>
        <dbReference type="PROSITE-ProRule" id="PRU00041"/>
    </source>
</evidence>
<evidence type="ECO:0000255" key="6">
    <source>
        <dbReference type="PROSITE-ProRule" id="PRU00062"/>
    </source>
</evidence>
<evidence type="ECO:0000255" key="7">
    <source>
        <dbReference type="PROSITE-ProRule" id="PRU00077"/>
    </source>
</evidence>
<evidence type="ECO:0000255" key="8">
    <source>
        <dbReference type="PROSITE-ProRule" id="PRU00145"/>
    </source>
</evidence>
<evidence type="ECO:0000255" key="9">
    <source>
        <dbReference type="PROSITE-ProRule" id="PRU00192"/>
    </source>
</evidence>
<evidence type="ECO:0000255" key="10">
    <source>
        <dbReference type="PROSITE-ProRule" id="PRU00448"/>
    </source>
</evidence>
<evidence type="ECO:0000256" key="11">
    <source>
        <dbReference type="SAM" id="MobiDB-lite"/>
    </source>
</evidence>
<evidence type="ECO:0000269" key="12">
    <source>
    </source>
</evidence>
<evidence type="ECO:0000269" key="13">
    <source>
    </source>
</evidence>
<evidence type="ECO:0000269" key="14">
    <source>
    </source>
</evidence>
<evidence type="ECO:0000269" key="15">
    <source>
    </source>
</evidence>
<evidence type="ECO:0000269" key="16">
    <source>
    </source>
</evidence>
<evidence type="ECO:0000269" key="17">
    <source>
    </source>
</evidence>
<evidence type="ECO:0000269" key="18">
    <source>
    </source>
</evidence>
<evidence type="ECO:0000269" key="19">
    <source>
    </source>
</evidence>
<evidence type="ECO:0000269" key="20">
    <source>
    </source>
</evidence>
<evidence type="ECO:0000269" key="21">
    <source>
    </source>
</evidence>
<evidence type="ECO:0000269" key="22">
    <source>
    </source>
</evidence>
<evidence type="ECO:0000269" key="23">
    <source>
    </source>
</evidence>
<evidence type="ECO:0000269" key="24">
    <source>
    </source>
</evidence>
<evidence type="ECO:0000269" key="25">
    <source>
    </source>
</evidence>
<evidence type="ECO:0000269" key="26">
    <source>
    </source>
</evidence>
<evidence type="ECO:0000269" key="27">
    <source>
    </source>
</evidence>
<evidence type="ECO:0000269" key="28">
    <source>
    </source>
</evidence>
<evidence type="ECO:0000269" key="29">
    <source>
    </source>
</evidence>
<evidence type="ECO:0000303" key="30">
    <source>
    </source>
</evidence>
<evidence type="ECO:0000303" key="31">
    <source>
    </source>
</evidence>
<evidence type="ECO:0000303" key="32">
    <source>
    </source>
</evidence>
<evidence type="ECO:0000303" key="33">
    <source>
    </source>
</evidence>
<evidence type="ECO:0000303" key="34">
    <source>
    </source>
</evidence>
<evidence type="ECO:0000303" key="35">
    <source>
    </source>
</evidence>
<evidence type="ECO:0000303" key="36">
    <source>
    </source>
</evidence>
<evidence type="ECO:0000303" key="37">
    <source>
    </source>
</evidence>
<evidence type="ECO:0000303" key="38">
    <source>
    </source>
</evidence>
<evidence type="ECO:0000303" key="39">
    <source ref="9"/>
</evidence>
<evidence type="ECO:0000305" key="40"/>
<evidence type="ECO:0000305" key="41">
    <source>
    </source>
</evidence>
<evidence type="ECO:0000312" key="42">
    <source>
        <dbReference type="HGNC" id="HGNC:6183"/>
    </source>
</evidence>
<evidence type="ECO:0007744" key="43">
    <source>
        <dbReference type="PDB" id="6GBU"/>
    </source>
</evidence>
<evidence type="ECO:0007744" key="44">
    <source>
    </source>
</evidence>
<evidence type="ECO:0007744" key="45">
    <source>
    </source>
</evidence>
<evidence type="ECO:0007744" key="46">
    <source>
    </source>
</evidence>
<evidence type="ECO:0007829" key="47">
    <source>
        <dbReference type="PDB" id="1KI1"/>
    </source>
</evidence>
<evidence type="ECO:0007829" key="48">
    <source>
        <dbReference type="PDB" id="2KGR"/>
    </source>
</evidence>
<evidence type="ECO:0007829" key="49">
    <source>
        <dbReference type="PDB" id="2KHN"/>
    </source>
</evidence>
<evidence type="ECO:0007829" key="50">
    <source>
        <dbReference type="PDB" id="3FIA"/>
    </source>
</evidence>
<evidence type="ECO:0007829" key="51">
    <source>
        <dbReference type="PDB" id="3QBV"/>
    </source>
</evidence>
<evidence type="ECO:0007829" key="52">
    <source>
        <dbReference type="PDB" id="4IIM"/>
    </source>
</evidence>
<evidence type="ECO:0007829" key="53">
    <source>
        <dbReference type="PDB" id="5HZJ"/>
    </source>
</evidence>
<evidence type="ECO:0007829" key="54">
    <source>
        <dbReference type="PDB" id="6GBU"/>
    </source>
</evidence>
<evidence type="ECO:0007829" key="55">
    <source>
        <dbReference type="PDB" id="6H5T"/>
    </source>
</evidence>
<accession>Q15811</accession>
<accession>A7Y322</accession>
<accession>A8CTX8</accession>
<accession>A8CTY3</accession>
<accession>A8CTY7</accession>
<accession>A8D7D0</accession>
<accession>A8DCP3</accession>
<accession>B4DTM2</accession>
<accession>E7ERJ1</accession>
<accession>E9PE44</accession>
<accession>E9PG01</accession>
<accession>E9PHV2</accession>
<accession>O95216</accession>
<accession>Q0PW94</accession>
<accession>Q0PW95</accession>
<accession>Q0PW97</accession>
<accession>Q14BD3</accession>
<accession>Q1ED40</accession>
<accession>Q20BK3</accession>
<accession>Q9UET5</accession>
<accession>Q9UK60</accession>
<accession>Q9UNK1</accession>
<accession>Q9UNK2</accession>
<accession>Q9UQ92</accession>
<reference key="1">
    <citation type="journal article" date="1998" name="Genomics">
        <title>Two isoforms of a human intersectin (ITSN) protein are produced by brain-specific alternative splicing in a stop codon.</title>
        <authorList>
            <person name="Guipponi M."/>
            <person name="Scott H.S."/>
            <person name="Chen H."/>
            <person name="Schebesta A."/>
            <person name="Rossier C."/>
            <person name="Antonarakis S.E."/>
        </authorList>
    </citation>
    <scope>NUCLEOTIDE SEQUENCE [GENOMIC DNA / MRNA] (ISOFORMS 1 AND 2)</scope>
    <scope>VARIANT ASN-1137</scope>
    <scope>TISSUE SPECIFICITY</scope>
    <source>
        <tissue>Fetal brain</tissue>
    </source>
</reference>
<reference key="2">
    <citation type="journal article" date="1999" name="Eur. J. Hum. Genet.">
        <title>Alu-splice cloning of human intersectin (ITSN), a putative multivalent binding protein expressed in proliferating and differentiating neurons and overexpressed in Down syndrome.</title>
        <authorList>
            <person name="Pucharcos C."/>
            <person name="Fuentes J.-J."/>
            <person name="Casas C."/>
            <person name="de la Luna S."/>
            <person name="Alcantara S."/>
            <person name="Arbones M.L."/>
            <person name="Soriano E."/>
            <person name="Estivill X."/>
            <person name="Pritchard M."/>
        </authorList>
    </citation>
    <scope>NUCLEOTIDE SEQUENCE [MRNA] (ISOFORMS 1 AND 2)</scope>
    <scope>TISSUE SPECIFICITY</scope>
</reference>
<reference key="3">
    <citation type="journal article" date="2010" name="Mol. Biol. Rep.">
        <title>Structural diversity and differential expression of novel human intersectin 1 isoforms.</title>
        <authorList>
            <person name="Kropyvko S."/>
            <person name="Gerasymchuk D."/>
            <person name="Skrypkina I."/>
            <person name="Dergai M."/>
            <person name="Dergai O."/>
            <person name="Nikolaienko O."/>
            <person name="Rynditch A."/>
            <person name="Tsyba L."/>
        </authorList>
    </citation>
    <scope>NUCLEOTIDE SEQUENCE [MRNA] (ISOFORMS 3; 6; 7; 8; 9; 10; 11 AND 12)</scope>
    <scope>VARIANT ASN-1137</scope>
    <scope>ALTERNATIVE SPLICING</scope>
    <source>
        <tissue>Brain</tissue>
        <tissue>Lung</tissue>
    </source>
</reference>
<reference key="4">
    <citation type="journal article" date="2011" name="Gene">
        <title>Identification and characterization of a novel mammalian isoform of the endocytic adaptor ITSN1.</title>
        <authorList>
            <person name="Dergai M."/>
            <person name="Skrypkina I."/>
            <person name="Dergai O."/>
            <person name="Tsyba L."/>
            <person name="Novokhatska O."/>
            <person name="Filonenko V."/>
            <person name="Drobot L."/>
            <person name="Rynditch A."/>
        </authorList>
    </citation>
    <scope>NUCLEOTIDE SEQUENCE [MRNA] (ISOFORM 5)</scope>
    <scope>ALTERNATIVE SPLICING</scope>
    <scope>SUBCELLULAR LOCATION</scope>
    <scope>TISSUE SPECIFICITY</scope>
    <scope>INTERACTION WITH CBL AND DNM1</scope>
    <source>
        <tissue>Kidney</tissue>
    </source>
</reference>
<reference key="5">
    <citation type="journal article" date="2004" name="Nat. Genet.">
        <title>Complete sequencing and characterization of 21,243 full-length human cDNAs.</title>
        <authorList>
            <person name="Ota T."/>
            <person name="Suzuki Y."/>
            <person name="Nishikawa T."/>
            <person name="Otsuki T."/>
            <person name="Sugiyama T."/>
            <person name="Irie R."/>
            <person name="Wakamatsu A."/>
            <person name="Hayashi K."/>
            <person name="Sato H."/>
            <person name="Nagai K."/>
            <person name="Kimura K."/>
            <person name="Makita H."/>
            <person name="Sekine M."/>
            <person name="Obayashi M."/>
            <person name="Nishi T."/>
            <person name="Shibahara T."/>
            <person name="Tanaka T."/>
            <person name="Ishii S."/>
            <person name="Yamamoto J."/>
            <person name="Saito K."/>
            <person name="Kawai Y."/>
            <person name="Isono Y."/>
            <person name="Nakamura Y."/>
            <person name="Nagahari K."/>
            <person name="Murakami K."/>
            <person name="Yasuda T."/>
            <person name="Iwayanagi T."/>
            <person name="Wagatsuma M."/>
            <person name="Shiratori A."/>
            <person name="Sudo H."/>
            <person name="Hosoiri T."/>
            <person name="Kaku Y."/>
            <person name="Kodaira H."/>
            <person name="Kondo H."/>
            <person name="Sugawara M."/>
            <person name="Takahashi M."/>
            <person name="Kanda K."/>
            <person name="Yokoi T."/>
            <person name="Furuya T."/>
            <person name="Kikkawa E."/>
            <person name="Omura Y."/>
            <person name="Abe K."/>
            <person name="Kamihara K."/>
            <person name="Katsuta N."/>
            <person name="Sato K."/>
            <person name="Tanikawa M."/>
            <person name="Yamazaki M."/>
            <person name="Ninomiya K."/>
            <person name="Ishibashi T."/>
            <person name="Yamashita H."/>
            <person name="Murakawa K."/>
            <person name="Fujimori K."/>
            <person name="Tanai H."/>
            <person name="Kimata M."/>
            <person name="Watanabe M."/>
            <person name="Hiraoka S."/>
            <person name="Chiba Y."/>
            <person name="Ishida S."/>
            <person name="Ono Y."/>
            <person name="Takiguchi S."/>
            <person name="Watanabe S."/>
            <person name="Yosida M."/>
            <person name="Hotuta T."/>
            <person name="Kusano J."/>
            <person name="Kanehori K."/>
            <person name="Takahashi-Fujii A."/>
            <person name="Hara H."/>
            <person name="Tanase T.-O."/>
            <person name="Nomura Y."/>
            <person name="Togiya S."/>
            <person name="Komai F."/>
            <person name="Hara R."/>
            <person name="Takeuchi K."/>
            <person name="Arita M."/>
            <person name="Imose N."/>
            <person name="Musashino K."/>
            <person name="Yuuki H."/>
            <person name="Oshima A."/>
            <person name="Sasaki N."/>
            <person name="Aotsuka S."/>
            <person name="Yoshikawa Y."/>
            <person name="Matsunawa H."/>
            <person name="Ichihara T."/>
            <person name="Shiohata N."/>
            <person name="Sano S."/>
            <person name="Moriya S."/>
            <person name="Momiyama H."/>
            <person name="Satoh N."/>
            <person name="Takami S."/>
            <person name="Terashima Y."/>
            <person name="Suzuki O."/>
            <person name="Nakagawa S."/>
            <person name="Senoh A."/>
            <person name="Mizoguchi H."/>
            <person name="Goto Y."/>
            <person name="Shimizu F."/>
            <person name="Wakebe H."/>
            <person name="Hishigaki H."/>
            <person name="Watanabe T."/>
            <person name="Sugiyama A."/>
            <person name="Takemoto M."/>
            <person name="Kawakami B."/>
            <person name="Yamazaki M."/>
            <person name="Watanabe K."/>
            <person name="Kumagai A."/>
            <person name="Itakura S."/>
            <person name="Fukuzumi Y."/>
            <person name="Fujimori Y."/>
            <person name="Komiyama M."/>
            <person name="Tashiro H."/>
            <person name="Tanigami A."/>
            <person name="Fujiwara T."/>
            <person name="Ono T."/>
            <person name="Yamada K."/>
            <person name="Fujii Y."/>
            <person name="Ozaki K."/>
            <person name="Hirao M."/>
            <person name="Ohmori Y."/>
            <person name="Kawabata A."/>
            <person name="Hikiji T."/>
            <person name="Kobatake N."/>
            <person name="Inagaki H."/>
            <person name="Ikema Y."/>
            <person name="Okamoto S."/>
            <person name="Okitani R."/>
            <person name="Kawakami T."/>
            <person name="Noguchi S."/>
            <person name="Itoh T."/>
            <person name="Shigeta K."/>
            <person name="Senba T."/>
            <person name="Matsumura K."/>
            <person name="Nakajima Y."/>
            <person name="Mizuno T."/>
            <person name="Morinaga M."/>
            <person name="Sasaki M."/>
            <person name="Togashi T."/>
            <person name="Oyama M."/>
            <person name="Hata H."/>
            <person name="Watanabe M."/>
            <person name="Komatsu T."/>
            <person name="Mizushima-Sugano J."/>
            <person name="Satoh T."/>
            <person name="Shirai Y."/>
            <person name="Takahashi Y."/>
            <person name="Nakagawa K."/>
            <person name="Okumura K."/>
            <person name="Nagase T."/>
            <person name="Nomura N."/>
            <person name="Kikuchi H."/>
            <person name="Masuho Y."/>
            <person name="Yamashita R."/>
            <person name="Nakai K."/>
            <person name="Yada T."/>
            <person name="Nakamura Y."/>
            <person name="Ohara O."/>
            <person name="Isogai T."/>
            <person name="Sugano S."/>
        </authorList>
    </citation>
    <scope>NUCLEOTIDE SEQUENCE [LARGE SCALE MRNA] (ISOFORM 7)</scope>
    <source>
        <tissue>Placenta</tissue>
    </source>
</reference>
<reference key="6">
    <citation type="journal article" date="2000" name="Nature">
        <title>The DNA sequence of human chromosome 21.</title>
        <authorList>
            <person name="Hattori M."/>
            <person name="Fujiyama A."/>
            <person name="Taylor T.D."/>
            <person name="Watanabe H."/>
            <person name="Yada T."/>
            <person name="Park H.-S."/>
            <person name="Toyoda A."/>
            <person name="Ishii K."/>
            <person name="Totoki Y."/>
            <person name="Choi D.-K."/>
            <person name="Groner Y."/>
            <person name="Soeda E."/>
            <person name="Ohki M."/>
            <person name="Takagi T."/>
            <person name="Sakaki Y."/>
            <person name="Taudien S."/>
            <person name="Blechschmidt K."/>
            <person name="Polley A."/>
            <person name="Menzel U."/>
            <person name="Delabar J."/>
            <person name="Kumpf K."/>
            <person name="Lehmann R."/>
            <person name="Patterson D."/>
            <person name="Reichwald K."/>
            <person name="Rump A."/>
            <person name="Schillhabel M."/>
            <person name="Schudy A."/>
            <person name="Zimmermann W."/>
            <person name="Rosenthal A."/>
            <person name="Kudoh J."/>
            <person name="Shibuya K."/>
            <person name="Kawasaki K."/>
            <person name="Asakawa S."/>
            <person name="Shintani A."/>
            <person name="Sasaki T."/>
            <person name="Nagamine K."/>
            <person name="Mitsuyama S."/>
            <person name="Antonarakis S.E."/>
            <person name="Minoshima S."/>
            <person name="Shimizu N."/>
            <person name="Nordsiek G."/>
            <person name="Hornischer K."/>
            <person name="Brandt P."/>
            <person name="Scharfe M."/>
            <person name="Schoen O."/>
            <person name="Desario A."/>
            <person name="Reichelt J."/>
            <person name="Kauer G."/>
            <person name="Bloecker H."/>
            <person name="Ramser J."/>
            <person name="Beck A."/>
            <person name="Klages S."/>
            <person name="Hennig S."/>
            <person name="Riesselmann L."/>
            <person name="Dagand E."/>
            <person name="Wehrmeyer S."/>
            <person name="Borzym K."/>
            <person name="Gardiner K."/>
            <person name="Nizetic D."/>
            <person name="Francis F."/>
            <person name="Lehrach H."/>
            <person name="Reinhardt R."/>
            <person name="Yaspo M.-L."/>
        </authorList>
    </citation>
    <scope>NUCLEOTIDE SEQUENCE [LARGE SCALE GENOMIC DNA]</scope>
</reference>
<reference key="7">
    <citation type="journal article" date="2004" name="Genome Res.">
        <title>The status, quality, and expansion of the NIH full-length cDNA project: the Mammalian Gene Collection (MGC).</title>
        <authorList>
            <consortium name="The MGC Project Team"/>
        </authorList>
    </citation>
    <scope>NUCLEOTIDE SEQUENCE [LARGE SCALE MRNA] (ISOFORMS 1 AND 3)</scope>
    <source>
        <tissue>Embryonic stem cell</tissue>
    </source>
</reference>
<reference key="8">
    <citation type="journal article" date="1996" name="Nat. Biotechnol.">
        <title>Cloning of ligand targets: systematic isolation of SH3 domain-containing proteins.</title>
        <authorList>
            <person name="Sparks A.B."/>
            <person name="Hoffman N.G."/>
            <person name="McConnell S.J."/>
            <person name="Fowlkes D.M."/>
            <person name="Kay B.K."/>
        </authorList>
    </citation>
    <scope>NUCLEOTIDE SEQUENCE [MRNA] OF 620-1721 (ISOFORM 3)</scope>
    <source>
        <tissue>Bone marrow</tissue>
    </source>
</reference>
<reference key="9">
    <citation type="submission" date="1999-08" db="EMBL/GenBank/DDBJ databases">
        <title>Mouse homologs of human chromosome 21 genes.</title>
        <authorList>
            <person name="Tsyba L.O."/>
            <person name="Kvasha S.M."/>
            <person name="Skripkina I.Y."/>
            <person name="Anoprienko O.V."/>
            <person name="Slavov D."/>
            <person name="Tassone F."/>
            <person name="Rynditch A.V."/>
            <person name="Gardiner K."/>
        </authorList>
    </citation>
    <scope>NUCLEOTIDE SEQUENCE [MRNA] OF 963-1721 (ISOFORM 3)</scope>
    <source>
        <tissue>Brain</tissue>
    </source>
</reference>
<reference key="10">
    <citation type="journal article" date="2001" name="Biochim. Biophys. Acta">
        <title>The human intersectin genes and their spliced variants are differentially expressed.</title>
        <authorList>
            <person name="Pucharcos C."/>
            <person name="Casas C."/>
            <person name="Nadal M."/>
            <person name="Estivill X."/>
            <person name="de la Luna S."/>
        </authorList>
    </citation>
    <scope>ALTERNATIVE SPLICING</scope>
    <scope>TISSUE SPECIFICITY</scope>
    <source>
        <tissue>Brain</tissue>
        <tissue>Fetal liver</tissue>
    </source>
</reference>
<reference key="11">
    <citation type="journal article" date="1997" name="Cytogenet. Cell Genet.">
        <title>The SH3D1A gene maps to human chromosome 21q22.1--&gt;q22.2.</title>
        <authorList>
            <person name="Chen H."/>
            <person name="Antonarakis S.E."/>
        </authorList>
    </citation>
    <scope>GENE MAPPING</scope>
</reference>
<reference key="12">
    <citation type="journal article" date="2001" name="Nat. Cell Biol.">
        <title>Endocytic protein intersectin-l regulates actin assembly via Cdc42 and N-WASP.</title>
        <authorList>
            <person name="Hussain N.K."/>
            <person name="Jenna S."/>
            <person name="Glogauer M."/>
            <person name="Quinn C.C."/>
            <person name="Wasiak S."/>
            <person name="Guipponi M."/>
            <person name="Antonarakis S.E."/>
            <person name="Kay B.K."/>
            <person name="Stossel T.P."/>
            <person name="Lamarche-Vane N."/>
            <person name="McPherson P.S."/>
        </authorList>
    </citation>
    <scope>FUNCTION</scope>
    <scope>INTERACTION WITH CDC42 AND WASL</scope>
</reference>
<reference key="13">
    <citation type="journal article" date="2002" name="J. Biol. Chem.">
        <title>The activity of the GTPase-activating protein CdGAP is regulated by the endocytic protein intersectin.</title>
        <authorList>
            <person name="Jenna S."/>
            <person name="Hussain N.K."/>
            <person name="Danek E.I."/>
            <person name="Triki I."/>
            <person name="Wasiak S."/>
            <person name="McPherson P.S."/>
            <person name="Lamarche-Vane N."/>
        </authorList>
    </citation>
    <scope>FUNCTION</scope>
    <scope>INTERACTION WITH ARHGAP31</scope>
    <scope>SUBCELLULAR LOCATION</scope>
</reference>
<reference key="14">
    <citation type="journal article" date="2008" name="Proc. Natl. Acad. Sci. U.S.A.">
        <title>A quantitative atlas of mitotic phosphorylation.</title>
        <authorList>
            <person name="Dephoure N."/>
            <person name="Zhou C."/>
            <person name="Villen J."/>
            <person name="Beausoleil S.A."/>
            <person name="Bakalarski C.E."/>
            <person name="Elledge S.J."/>
            <person name="Gygi S.P."/>
        </authorList>
    </citation>
    <scope>PHOSPHORYLATION [LARGE SCALE ANALYSIS] AT SER-902 AND SER-904</scope>
    <scope>IDENTIFICATION BY MASS SPECTROMETRY [LARGE SCALE ANALYSIS]</scope>
    <source>
        <tissue>Cervix carcinoma</tissue>
    </source>
</reference>
<reference key="15">
    <citation type="journal article" date="2009" name="Anal. Chem.">
        <title>Lys-N and trypsin cover complementary parts of the phosphoproteome in a refined SCX-based approach.</title>
        <authorList>
            <person name="Gauci S."/>
            <person name="Helbig A.O."/>
            <person name="Slijper M."/>
            <person name="Krijgsveld J."/>
            <person name="Heck A.J."/>
            <person name="Mohammed S."/>
        </authorList>
    </citation>
    <scope>IDENTIFICATION BY MASS SPECTROMETRY [LARGE SCALE ANALYSIS]</scope>
</reference>
<reference key="16">
    <citation type="journal article" date="2009" name="J. Cell. Biochem.">
        <title>Alternative splicing of ADAM15 regulates its interactions with cellular SH3 proteins.</title>
        <authorList>
            <person name="Kleino I."/>
            <person name="Ortiz R.M."/>
            <person name="Yritys M."/>
            <person name="Huovila A.P."/>
            <person name="Saksela K."/>
        </authorList>
    </citation>
    <scope>INTERACTION WITH ADAM15</scope>
</reference>
<reference key="17">
    <citation type="journal article" date="2009" name="Sci. Signal.">
        <title>Quantitative phosphoproteomic analysis of T cell receptor signaling reveals system-wide modulation of protein-protein interactions.</title>
        <authorList>
            <person name="Mayya V."/>
            <person name="Lundgren D.H."/>
            <person name="Hwang S.-I."/>
            <person name="Rezaul K."/>
            <person name="Wu L."/>
            <person name="Eng J.K."/>
            <person name="Rodionov V."/>
            <person name="Han D.K."/>
        </authorList>
    </citation>
    <scope>IDENTIFICATION BY MASS SPECTROMETRY [LARGE SCALE ANALYSIS]</scope>
    <source>
        <tissue>Leukemic T-cell</tissue>
    </source>
</reference>
<reference key="18">
    <citation type="journal article" date="2010" name="Biochem. Biophys. Res. Commun.">
        <title>Intersectin 1 forms complexes with SGIP1 and Reps1 in clathrin-coated pits.</title>
        <authorList>
            <person name="Dergai O."/>
            <person name="Novokhatska O."/>
            <person name="Dergai M."/>
            <person name="Skrypkina I."/>
            <person name="Tsyba L."/>
            <person name="Moreau J."/>
            <person name="Rynditch A."/>
        </authorList>
    </citation>
    <scope>INTERACTION WITH REPS1 AND SGIP1</scope>
    <scope>SUBCELLULAR LOCATION</scope>
</reference>
<reference key="19">
    <citation type="journal article" date="2010" name="Sci. Signal.">
        <title>Quantitative phosphoproteomics reveals widespread full phosphorylation site occupancy during mitosis.</title>
        <authorList>
            <person name="Olsen J.V."/>
            <person name="Vermeulen M."/>
            <person name="Santamaria A."/>
            <person name="Kumar C."/>
            <person name="Miller M.L."/>
            <person name="Jensen L.J."/>
            <person name="Gnad F."/>
            <person name="Cox J."/>
            <person name="Jensen T.S."/>
            <person name="Nigg E.A."/>
            <person name="Brunak S."/>
            <person name="Mann M."/>
        </authorList>
    </citation>
    <scope>IDENTIFICATION BY MASS SPECTROMETRY [LARGE SCALE ANALYSIS]</scope>
    <source>
        <tissue>Cervix carcinoma</tissue>
    </source>
</reference>
<reference key="20">
    <citation type="journal article" date="2010" name="Science">
        <title>FCHo proteins are nucleators of clathrin-mediated endocytosis.</title>
        <authorList>
            <person name="Henne W.M."/>
            <person name="Boucrot E."/>
            <person name="Meinecke M."/>
            <person name="Evergren E."/>
            <person name="Vallis Y."/>
            <person name="Mittal R."/>
            <person name="McMahon H.T."/>
        </authorList>
    </citation>
    <scope>INTERACTION WITH FCHO2</scope>
</reference>
<reference key="21">
    <citation type="journal article" date="2011" name="BMC Syst. Biol.">
        <title>Initial characterization of the human central proteome.</title>
        <authorList>
            <person name="Burkard T.R."/>
            <person name="Planyavsky M."/>
            <person name="Kaupe I."/>
            <person name="Breitwieser F.P."/>
            <person name="Buerckstuemmer T."/>
            <person name="Bennett K.L."/>
            <person name="Superti-Furga G."/>
            <person name="Colinge J."/>
        </authorList>
    </citation>
    <scope>IDENTIFICATION BY MASS SPECTROMETRY [LARGE SCALE ANALYSIS]</scope>
</reference>
<reference key="22">
    <citation type="journal article" date="2012" name="Mol. Biol. Cell">
        <title>The clathrin adaptor Dab2 recruits EH domain scaffold proteins to regulate integrin beta1 endocytosis.</title>
        <authorList>
            <person name="Teckchandani A."/>
            <person name="Mulkearns E.E."/>
            <person name="Randolph T.W."/>
            <person name="Toida N."/>
            <person name="Cooper J.A."/>
        </authorList>
    </citation>
    <scope>FUNCTION</scope>
    <scope>INTERACTION WITH DAB2</scope>
</reference>
<reference key="23">
    <citation type="journal article" date="2012" name="Nat. Cell Biol.">
        <title>Distinct and separable activities of the endocytic clathrin-coat components Fcho1/2 and AP-2 in developmental patterning.</title>
        <authorList>
            <person name="Umasankar P.K."/>
            <person name="Sanker S."/>
            <person name="Thieman J.R."/>
            <person name="Chakraborty S."/>
            <person name="Wendland B."/>
            <person name="Tsang M."/>
            <person name="Traub L.M."/>
        </authorList>
    </citation>
    <scope>INTERACTION WITH FCHO1</scope>
</reference>
<reference key="24">
    <citation type="journal article" date="2013" name="J. Proteome Res.">
        <title>Toward a comprehensive characterization of a human cancer cell phosphoproteome.</title>
        <authorList>
            <person name="Zhou H."/>
            <person name="Di Palma S."/>
            <person name="Preisinger C."/>
            <person name="Peng M."/>
            <person name="Polat A.N."/>
            <person name="Heck A.J."/>
            <person name="Mohammed S."/>
        </authorList>
    </citation>
    <scope>PHOSPHORYLATION [LARGE SCALE ANALYSIS] AT SER-203; SER-902; SER-904; SER-986 AND SER-1137</scope>
    <scope>IDENTIFICATION BY MASS SPECTROMETRY [LARGE SCALE ANALYSIS]</scope>
    <source>
        <tissue>Cervix carcinoma</tissue>
        <tissue>Erythroleukemia</tissue>
    </source>
</reference>
<reference key="25">
    <citation type="journal article" date="2014" name="J. Proteomics">
        <title>An enzyme assisted RP-RPLC approach for in-depth analysis of human liver phosphoproteome.</title>
        <authorList>
            <person name="Bian Y."/>
            <person name="Song C."/>
            <person name="Cheng K."/>
            <person name="Dong M."/>
            <person name="Wang F."/>
            <person name="Huang J."/>
            <person name="Sun D."/>
            <person name="Wang L."/>
            <person name="Ye M."/>
            <person name="Zou H."/>
        </authorList>
    </citation>
    <scope>PHOSPHORYLATION [LARGE SCALE ANALYSIS] AT SER-901; SER-902; SER-904; SER-995 AND THR-1144</scope>
    <scope>IDENTIFICATION BY MASS SPECTROMETRY [LARGE SCALE ANALYSIS]</scope>
    <source>
        <tissue>Liver</tissue>
    </source>
</reference>
<reference key="26">
    <citation type="journal article" date="2016" name="Nat. Microbiol.">
        <title>NPF motifs in the vaccinia virus protein A36 recruit intersectin-1 to promote Cdc42:N-WASP-mediated viral release from infected cells.</title>
        <authorList>
            <person name="Snetkov X."/>
            <person name="Weisswange I."/>
            <person name="Pfanzelter J."/>
            <person name="Humphries A.C."/>
            <person name="Way M."/>
        </authorList>
    </citation>
    <scope>INTERACTION WITH VACCINIA VIRUS PROTEIN A36</scope>
</reference>
<reference key="27">
    <citation type="journal article" date="2017" name="EMBO Rep.">
        <title>Intersectin-s interaction with DENND2B facilitates recycling of epidermal growth factor receptor.</title>
        <authorList>
            <person name="Ioannou M.S."/>
            <person name="Kulasekaran G."/>
            <person name="Fotouhi M."/>
            <person name="Morein J.J."/>
            <person name="Han C."/>
            <person name="Tse S."/>
            <person name="Nossova N."/>
            <person name="Han T."/>
            <person name="Mannard E."/>
            <person name="McPherson P.S."/>
        </authorList>
    </citation>
    <scope>INTERACTION WITH DENND2B</scope>
    <scope>SUBCELLULAR LOCATION</scope>
</reference>
<reference key="28">
    <citation type="journal article" date="2018" name="Biochem. J.">
        <title>Intersectin goes nuclear: secret life of an endocytic protein.</title>
        <authorList>
            <person name="Alvisi G."/>
            <person name="Paolini L."/>
            <person name="Contarini A."/>
            <person name="Zambarda C."/>
            <person name="Di Antonio V."/>
            <person name="Colosini A."/>
            <person name="Mercandelli N."/>
            <person name="Timmoneri M."/>
            <person name="Palu G."/>
            <person name="Caimi L."/>
            <person name="Ricotta D."/>
            <person name="Radeghieri A."/>
        </authorList>
    </citation>
    <scope>INTERACTION WITH KPNA1 AND LMNA (ISOFORM 2)</scope>
    <scope>SUBCELLULAR LOCATION (ISOFORM 2)</scope>
    <scope>NUCLEAR LOCALIZATION SIGNAL (ISOFORM 2)</scope>
</reference>
<reference key="29">
    <citation type="journal article" date="2020" name="Dev. Cell">
        <title>A DNM2 Centronuclear Myopathy Mutation Reveals a Link between Recycling Endosome Scission and Autophagy.</title>
        <authorList>
            <person name="Puri C."/>
            <person name="Manni M.M."/>
            <person name="Vicinanza M."/>
            <person name="Hilcenko C."/>
            <person name="Zhu Y."/>
            <person name="Runwal G."/>
            <person name="Stamatakou E."/>
            <person name="Menzies F.M."/>
            <person name="Mamchaoui K."/>
            <person name="Bitoun M."/>
            <person name="Rubinsztein D.C."/>
        </authorList>
    </citation>
    <scope>INTERACTION WITH DNM2</scope>
</reference>
<reference key="30">
    <citation type="journal article" date="2002" name="Nat. Struct. Biol.">
        <title>Structural basis for the selective activation of Rho GTPases by Dbl exchange factors.</title>
        <authorList>
            <person name="Snyder J.T."/>
            <person name="Worthylake D.K."/>
            <person name="Rossman K.L."/>
            <person name="Betts L."/>
            <person name="Pruitt W.M."/>
            <person name="Siderovski D.P."/>
            <person name="Der C.J."/>
            <person name="Sondek J."/>
        </authorList>
    </citation>
    <scope>X-RAY CRYSTALLOGRAPHY (2.3 ANGSTROMS) OF 1229-1581 IN COMPLEX WITH CDC42</scope>
    <scope>MUTAGENESIS OF MET-1369 AND LEU-1376</scope>
</reference>
<reference evidence="43" key="31">
    <citation type="journal article" date="2018" name="Cell">
        <title>A Flat BAR Protein Promotes Actin Polymerization at the Base of Clathrin-Coated Pits.</title>
        <authorList>
            <person name="Almeida-Souza L."/>
            <person name="Frank R.A.W."/>
            <person name="Garcia-Nafria J."/>
            <person name="Colussi A."/>
            <person name="Gunawardana N."/>
            <person name="Johnson C.M."/>
            <person name="Yu M."/>
            <person name="Howard G."/>
            <person name="Andrews B."/>
            <person name="Vallis Y."/>
            <person name="McMahon H.T."/>
        </authorList>
    </citation>
    <scope>X-RAY CRYSTALLOGRAPHY (3.44 ANGSTROMS) OF 1074-1138 IN COMPLEX WITH FCHSD2</scope>
    <scope>FUNCTION</scope>
    <scope>SUBCELLULAR LOCATION</scope>
    <scope>MUTAGENESIS OF ILE-1078 AND ARG-1119</scope>
</reference>
<comment type="function">
    <text evidence="2 3 13 15 23 27">Adapter protein that provides a link between the endocytic membrane traffic and the actin assembly machinery (PubMed:11584276, PubMed:29887380). Acts as a guanine nucleotide exchange factor (GEF) for CDC42, and thereby stimulates actin nucleation mediated by WASL and the ARP2/3 complex (PubMed:11584276). Plays a role in the assembly and maturation of clathrin-coated vesicles (By similarity). Recruits FCHSD2 to clathrin-coated pits (PubMed:29887380). Involved in endocytosis of activated EGFR, and probably also other growth factor receptors (By similarity). Involved in endocytosis of integrin beta-1 (ITGB1) and transferrin receptor (TFR); internalization of ITGB1 as DAB2-dependent cargo but not TFR may involve association with DAB2 (PubMed:22648170). Promotes ubiquitination and subsequent degradation of EGFR, and thereby contributes to the down-regulation of EGFR-dependent signaling pathways. In chromaffin cells, required for normal exocytosis of catecholamines. Required for rapid replenishment of release-ready synaptic vesicles at presynaptic active zones (By similarity). Inhibits ARHGAP31 activity toward RAC1 (PubMed:11744688).</text>
</comment>
<comment type="function">
    <molecule>Isoform 1</molecule>
    <text evidence="3">Plays a role in synaptic vesicle endocytosis in brain neurons.</text>
</comment>
<comment type="cofactor">
    <cofactor evidence="5">
        <name>Ca(2+)</name>
        <dbReference type="ChEBI" id="CHEBI:29108"/>
    </cofactor>
</comment>
<comment type="subunit">
    <text evidence="2 3 13 15 16 17 19 20 21 22 23 25 26 27 28">Interacts (via DH domain) with CDC42 (PubMed:11584276, PubMed:12006984). Interacts (via SH3 domain 1) with WASL (PubMed:11584276). Interacts with dynamin, SNAP25 and SNAP23 (By similarity). Interacts with clathrin-associated proteins and other components of the endocytic machinery, such as SPIN90, EPS15, EPN1, EPN2, STON2, FCHO1, FCHO2 and DAB2 (PubMed:20448150, PubMed:22484487, PubMed:22648170). Interacts (via SH3 domains) with REPS1 and SGIP1 (PubMed:20946875). Interacts with ARHGAP31 (PubMed:11744688). Interacts with ADAM15 (PubMed:19718658). Interacts with PRRT2 (By similarity). Interacts (via SH3 domain 4) with FCHSD2 (via SH3 domain 2) (PubMed:29887380). Interacts (via SH3 domain 1) with DENND2B (PubMed:29030480). Interacts (via SH3 domains) with CBL (By similarity). Isoform 2: Interacts with CBL and DNM1 (PubMed:21712076). Isoform 2: Interacts with LMNA (PubMed:29599122). Isoform 2: Interacts with importin subunit KPNA1; this is likely to mediate its import into the nucleus (PubMed:29599122). Interacts with DNM2 (PubMed:32315611).</text>
</comment>
<comment type="subunit">
    <text evidence="24">(Microbial infection) Interacts with vaccinia virus protein A36 (PubMed:27670116).</text>
</comment>
<comment type="interaction">
    <interactant intactId="EBI-602041">
        <id>Q15811</id>
    </interactant>
    <interactant intactId="EBI-432924">
        <id>P63010</id>
        <label>AP2B1</label>
    </interactant>
    <organismsDiffer>false</organismsDiffer>
    <experiments>5</experiments>
</comment>
<comment type="interaction">
    <interactant intactId="EBI-602041">
        <id>Q15811</id>
    </interactant>
    <interactant intactId="EBI-518228">
        <id>P22681</id>
        <label>CBL</label>
    </interactant>
    <organismsDiffer>false</organismsDiffer>
    <experiments>12</experiments>
</comment>
<comment type="interaction">
    <interactant intactId="EBI-602041">
        <id>Q15811</id>
    </interactant>
    <interactant intactId="EBI-3625591">
        <id>P60953-1</id>
        <label>CDC42</label>
    </interactant>
    <organismsDiffer>false</organismsDiffer>
    <experiments>2</experiments>
</comment>
<comment type="interaction">
    <interactant intactId="EBI-602041">
        <id>Q15811</id>
    </interactant>
    <interactant intactId="EBI-529989">
        <id>Q9NRI5</id>
        <label>DISC1</label>
    </interactant>
    <organismsDiffer>false</organismsDiffer>
    <experiments>4</experiments>
</comment>
<comment type="interaction">
    <interactant intactId="EBI-602041">
        <id>Q15811</id>
    </interactant>
    <interactant intactId="EBI-346547">
        <id>P50570</id>
        <label>DNM2</label>
    </interactant>
    <organismsDiffer>false</organismsDiffer>
    <experiments>2</experiments>
</comment>
<comment type="interaction">
    <interactant intactId="EBI-602041">
        <id>Q15811</id>
    </interactant>
    <interactant intactId="EBI-396684">
        <id>P42566</id>
        <label>EPS15</label>
    </interactant>
    <organismsDiffer>false</organismsDiffer>
    <experiments>3</experiments>
</comment>
<comment type="interaction">
    <interactant intactId="EBI-602041">
        <id>Q15811</id>
    </interactant>
    <interactant intactId="EBI-2556746">
        <id>Q9UBC2</id>
        <label>EPS15L1</label>
    </interactant>
    <organismsDiffer>false</organismsDiffer>
    <experiments>5</experiments>
</comment>
<comment type="interaction">
    <interactant intactId="EBI-602041">
        <id>Q15811</id>
    </interactant>
    <interactant intactId="EBI-2798728">
        <id>P61968</id>
        <label>LMO4</label>
    </interactant>
    <organismsDiffer>false</organismsDiffer>
    <experiments>3</experiments>
</comment>
<comment type="interaction">
    <interactant intactId="EBI-602041">
        <id>Q15811</id>
    </interactant>
    <interactant intactId="EBI-2821539">
        <id>O43426</id>
        <label>SYNJ1</label>
    </interactant>
    <organismsDiffer>false</organismsDiffer>
    <experiments>2</experiments>
</comment>
<comment type="interaction">
    <interactant intactId="EBI-602041">
        <id>Q15811</id>
    </interactant>
    <interactant intactId="EBI-6094986">
        <id>Q3UQN2</id>
        <label>Fcho2</label>
    </interactant>
    <organismsDiffer>true</organismsDiffer>
    <experiments>3</experiments>
</comment>
<comment type="interaction">
    <interactant intactId="EBI-8052560">
        <id>Q15811-1</id>
    </interactant>
    <interactant intactId="EBI-352622">
        <id>P07355</id>
        <label>ANXA2</label>
    </interactant>
    <organismsDiffer>false</organismsDiffer>
    <experiments>2</experiments>
</comment>
<comment type="interaction">
    <interactant intactId="EBI-8052395">
        <id>Q15811-2</id>
    </interactant>
    <interactant intactId="EBI-1384248">
        <id>O15357</id>
        <label>INPPL1</label>
    </interactant>
    <organismsDiffer>false</organismsDiffer>
    <experiments>9</experiments>
</comment>
<comment type="interaction">
    <interactant intactId="EBI-8052395">
        <id>Q15811-2</id>
    </interactant>
    <interactant intactId="EBI-8020091">
        <id>Q925Q9</id>
        <label>Sh3kbp1</label>
    </interactant>
    <organismsDiffer>true</organismsDiffer>
    <experiments>4</experiments>
</comment>
<comment type="subcellular location">
    <subcellularLocation>
        <location evidence="15">Endomembrane system</location>
    </subcellularLocation>
    <subcellularLocation>
        <location evidence="2">Synapse</location>
        <location evidence="2">Synaptosome</location>
    </subcellularLocation>
    <subcellularLocation>
        <location evidence="15">Cell projection</location>
        <location evidence="15">Lamellipodium</location>
    </subcellularLocation>
    <subcellularLocation>
        <location evidence="15 20">Cell membrane</location>
    </subcellularLocation>
    <subcellularLocation>
        <location evidence="20 27">Membrane</location>
        <location evidence="20 27">Clathrin-coated pit</location>
    </subcellularLocation>
    <subcellularLocation>
        <location evidence="25">Recycling endosome</location>
    </subcellularLocation>
    <subcellularLocation>
        <location evidence="3">Endosome</location>
    </subcellularLocation>
    <subcellularLocation>
        <location evidence="3">Cytoplasmic vesicle</location>
    </subcellularLocation>
    <text evidence="20 25">Colocalizes with SGIP1 at the plasma membrane in structures corresponding most probably to clathrin-coated pits (PubMed:20946875). Colocalizes with RAB13 on cytoplasmic vesicles that are most likely recycling endosomes (PubMed:29030480).</text>
</comment>
<comment type="subcellular location">
    <molecule>Isoform 2</molecule>
    <subcellularLocation>
        <location evidence="26">Cytoplasm</location>
    </subcellularLocation>
    <subcellularLocation>
        <location evidence="21">Endomembrane system</location>
    </subcellularLocation>
    <subcellularLocation>
        <location evidence="26">Nucleus envelope</location>
    </subcellularLocation>
    <text evidence="26">Shuttles between the cytoplasm and nucleus in an XPO1/CRM1-dependent manner.</text>
</comment>
<comment type="subcellular location">
    <molecule>Isoform 5</molecule>
    <subcellularLocation>
        <location evidence="21">Endomembrane system</location>
    </subcellularLocation>
</comment>
<comment type="alternative products">
    <event type="alternative splicing"/>
    <isoform>
        <id>Q15811-1</id>
        <name>1</name>
        <name>Long</name>
        <name>ITSN-l</name>
        <sequence type="displayed"/>
    </isoform>
    <isoform>
        <id>Q15811-2</id>
        <name>2</name>
        <name>Short</name>
        <name evidence="35">ITSN-s</name>
        <sequence type="described" ref="VSP_004295"/>
    </isoform>
    <isoform>
        <id>Q15811-3</id>
        <name>3</name>
        <name>Short 2</name>
        <name>SH3P17</name>
        <sequence type="described" ref="VSP_004293 VSP_004294 VSP_004295"/>
    </isoform>
    <isoform>
        <id>Q15811-4</id>
        <name>4</name>
        <sequence type="described" ref="VSP_004294"/>
    </isoform>
    <isoform>
        <id>Q15811-5</id>
        <name>5</name>
        <name>ITSN1-22a</name>
        <sequence type="described" ref="VSP_004293 VSP_047460 VSP_047461"/>
    </isoform>
    <isoform>
        <id>Q15811-6</id>
        <name>6</name>
        <name>Long form variant 4</name>
        <name>Short form variant 11</name>
        <sequence type="described" ref="VSP_004293 VSP_053320 VSP_053321"/>
    </isoform>
    <isoform>
        <id>Q15811-7</id>
        <name>7</name>
        <name>Short form variant 5</name>
        <sequence type="described" ref="VSP_004293 VSP_004295"/>
    </isoform>
    <isoform>
        <id>Q15811-8</id>
        <name>8</name>
        <name>Long form variant 2</name>
        <sequence type="described" ref="VSP_004293"/>
    </isoform>
    <isoform>
        <id>Q15811-9</id>
        <name>9</name>
        <name>Long form variant 3</name>
        <sequence type="described" ref="VSP_004293 VSP_053322"/>
    </isoform>
    <isoform>
        <id>Q15811-10</id>
        <name>10</name>
        <name>Short form variant 2</name>
        <sequence type="described" ref="VSP_053317 VSP_004293 VSP_004295"/>
    </isoform>
    <isoform>
        <id>Q15811-11</id>
        <name>11</name>
        <name>Short form variant 3</name>
        <sequence type="described" ref="VSP_053317 VSP_004294 VSP_004295"/>
    </isoform>
    <isoform>
        <id>Q15811-12</id>
        <name>12</name>
        <name>Short form variant 10</name>
        <sequence type="described" ref="VSP_053317 VSP_004293 VSP_004294 VSP_004295"/>
    </isoform>
    <isoform>
        <id>Q15811-13</id>
        <name>13</name>
        <name>Short form variant 14</name>
        <sequence type="described" ref="VSP_004293 VSP_053318 VSP_053319"/>
    </isoform>
    <text evidence="14 18">Additional isoforms seem to exist. Alternative splicing affects domains involved in protein recognition and thus may play a role in selecting specific interactions.</text>
</comment>
<comment type="tissue specificity">
    <text evidence="12 14 21 29">Isoform 1 is expressed almost exclusively in the brain. Isoform 2 is detected in brain, spleen, lung, liver, heart, skeletal muscle and kidney. Isoform 5 is primarily expressed in brain, spleen, lung and kidney (at protein level) (PubMed:21712076). Isoform 1 and isoform 2 are detected in brain (PubMed:10482960). Isoform 2 is ubiquitous in adult and fetal tissues with high expression in skeletal muscle, heart, spleen, ovary, testis and all fetal tissues tested and low expression in thymus, blood, lung, liver and pancreas. Isoform 1 is expressed almost exclusively in the brain, in all brain regions. Not expressed in the spinal cord (PubMed:11690630, PubMed:21712076, PubMed:9799604).</text>
</comment>
<comment type="domain">
    <text evidence="1">SH3-3, SH3-4 and SH3-5, but not SH3-1 and SH3-2 domains, bind to dynamin (By similarity). SH3-1 and SH3-4 bind to ARHGAP31.</text>
</comment>
<comment type="domain">
    <text evidence="1">The KLERQ domain binds to SNAP-25 and SNAP-23.</text>
</comment>
<comment type="domain">
    <text evidence="3">In an autoinhibited form the SH3 domain 5 may bind intramolecularly to the DH domain, thus blocking the CDC42-binding site.</text>
</comment>
<comment type="miscellaneous">
    <molecule>Isoform 6</molecule>
    <text evidence="40">Contains a premature stop codon, potentially subjected to NMD.</text>
</comment>
<comment type="miscellaneous">
    <molecule>Isoform 13</molecule>
    <text evidence="40">Contains a premature stop codon, potentially subjected to NMD.</text>
</comment>
<comment type="caution">
    <text evidence="41">Studies in clathrin-mediated endocytosis of ITGB1 and TFR used a siRNA mixture of ISTN1 and ISTN2, and a Dab2 mutant with impaired binding to EH domain-containing proteins EPS15 and ITSN1 suggesting a partially overlapping role of the EH domain-containing proteins.</text>
</comment>
<comment type="sequence caution" evidence="40">
    <conflict type="erroneous initiation">
        <sequence resource="EMBL-CDS" id="AAC50592"/>
    </conflict>
</comment>
<feature type="chain" id="PRO_0000080957" description="Intersectin-1">
    <location>
        <begin position="1"/>
        <end position="1721"/>
    </location>
</feature>
<feature type="domain" description="EH 1" evidence="7">
    <location>
        <begin position="21"/>
        <end position="109"/>
    </location>
</feature>
<feature type="domain" description="EF-hand 1" evidence="10">
    <location>
        <begin position="53"/>
        <end position="88"/>
    </location>
</feature>
<feature type="domain" description="EH 2" evidence="7">
    <location>
        <begin position="221"/>
        <end position="310"/>
    </location>
</feature>
<feature type="domain" description="EF-hand 2" evidence="10">
    <location>
        <begin position="254"/>
        <end position="289"/>
    </location>
</feature>
<feature type="domain" description="SH3 1" evidence="9">
    <location>
        <begin position="740"/>
        <end position="806"/>
    </location>
</feature>
<feature type="domain" description="SH3 2" evidence="9">
    <location>
        <begin position="913"/>
        <end position="971"/>
    </location>
</feature>
<feature type="domain" description="SH3 3" evidence="9">
    <location>
        <begin position="1002"/>
        <end position="1060"/>
    </location>
</feature>
<feature type="domain" description="SH3 4" evidence="9">
    <location>
        <begin position="1074"/>
        <end position="1138"/>
    </location>
</feature>
<feature type="domain" description="SH3 5" evidence="9">
    <location>
        <begin position="1155"/>
        <end position="1214"/>
    </location>
</feature>
<feature type="domain" description="DH" evidence="6">
    <location>
        <begin position="1237"/>
        <end position="1423"/>
    </location>
</feature>
<feature type="domain" description="PH" evidence="8">
    <location>
        <begin position="1462"/>
        <end position="1571"/>
    </location>
</feature>
<feature type="domain" description="C2" evidence="5">
    <location>
        <begin position="1579"/>
        <end position="1695"/>
    </location>
</feature>
<feature type="region of interest" description="Disordered" evidence="11">
    <location>
        <begin position="322"/>
        <end position="348"/>
    </location>
</feature>
<feature type="region of interest" description="KLERQ">
    <location>
        <begin position="326"/>
        <end position="702"/>
    </location>
</feature>
<feature type="region of interest" description="Disordered" evidence="11">
    <location>
        <begin position="650"/>
        <end position="701"/>
    </location>
</feature>
<feature type="region of interest" description="Disordered" evidence="11">
    <location>
        <begin position="836"/>
        <end position="868"/>
    </location>
</feature>
<feature type="region of interest" description="Required for interaction with FCHSD2" evidence="27">
    <location>
        <begin position="1074"/>
        <end position="1138"/>
    </location>
</feature>
<feature type="coiled-coil region" evidence="4">
    <location>
        <begin position="355"/>
        <end position="659"/>
    </location>
</feature>
<feature type="short sequence motif" description="Bipartite nuclear localization signal; in isoform 2" evidence="26">
    <location>
        <begin position="1104"/>
        <end position="1127"/>
    </location>
</feature>
<feature type="compositionally biased region" description="Polar residues" evidence="11">
    <location>
        <begin position="838"/>
        <end position="862"/>
    </location>
</feature>
<feature type="binding site" evidence="10">
    <location>
        <position position="66"/>
    </location>
    <ligand>
        <name>Ca(2+)</name>
        <dbReference type="ChEBI" id="CHEBI:29108"/>
        <label>1</label>
    </ligand>
</feature>
<feature type="binding site" evidence="10">
    <location>
        <position position="68"/>
    </location>
    <ligand>
        <name>Ca(2+)</name>
        <dbReference type="ChEBI" id="CHEBI:29108"/>
        <label>1</label>
    </ligand>
</feature>
<feature type="binding site" evidence="10">
    <location>
        <position position="70"/>
    </location>
    <ligand>
        <name>Ca(2+)</name>
        <dbReference type="ChEBI" id="CHEBI:29108"/>
        <label>1</label>
    </ligand>
</feature>
<feature type="binding site" evidence="10">
    <location>
        <position position="72"/>
    </location>
    <ligand>
        <name>Ca(2+)</name>
        <dbReference type="ChEBI" id="CHEBI:29108"/>
        <label>1</label>
    </ligand>
</feature>
<feature type="binding site" evidence="10">
    <location>
        <position position="77"/>
    </location>
    <ligand>
        <name>Ca(2+)</name>
        <dbReference type="ChEBI" id="CHEBI:29108"/>
        <label>1</label>
    </ligand>
</feature>
<feature type="binding site" evidence="10">
    <location>
        <position position="267"/>
    </location>
    <ligand>
        <name>Ca(2+)</name>
        <dbReference type="ChEBI" id="CHEBI:29108"/>
        <label>2</label>
    </ligand>
</feature>
<feature type="binding site" evidence="10">
    <location>
        <position position="269"/>
    </location>
    <ligand>
        <name>Ca(2+)</name>
        <dbReference type="ChEBI" id="CHEBI:29108"/>
        <label>2</label>
    </ligand>
</feature>
<feature type="binding site" evidence="10">
    <location>
        <position position="271"/>
    </location>
    <ligand>
        <name>Ca(2+)</name>
        <dbReference type="ChEBI" id="CHEBI:29108"/>
        <label>2</label>
    </ligand>
</feature>
<feature type="binding site" evidence="10">
    <location>
        <position position="273"/>
    </location>
    <ligand>
        <name>Ca(2+)</name>
        <dbReference type="ChEBI" id="CHEBI:29108"/>
        <label>2</label>
    </ligand>
</feature>
<feature type="binding site" evidence="10">
    <location>
        <position position="278"/>
    </location>
    <ligand>
        <name>Ca(2+)</name>
        <dbReference type="ChEBI" id="CHEBI:29108"/>
        <label>2</label>
    </ligand>
</feature>
<feature type="binding site" evidence="5">
    <location>
        <position position="1667"/>
    </location>
    <ligand>
        <name>Ca(2+)</name>
        <dbReference type="ChEBI" id="CHEBI:29108"/>
    </ligand>
</feature>
<feature type="binding site" evidence="5">
    <location>
        <position position="1670"/>
    </location>
    <ligand>
        <name>Ca(2+)</name>
        <dbReference type="ChEBI" id="CHEBI:29108"/>
    </ligand>
</feature>
<feature type="binding site" evidence="5">
    <location>
        <position position="1673"/>
    </location>
    <ligand>
        <name>Ca(2+)</name>
        <dbReference type="ChEBI" id="CHEBI:29108"/>
    </ligand>
</feature>
<feature type="modified residue" description="Phosphoserine" evidence="45">
    <location>
        <position position="203"/>
    </location>
</feature>
<feature type="modified residue" description="Phosphoserine" evidence="3">
    <location>
        <position position="318"/>
    </location>
</feature>
<feature type="modified residue" description="Phosphoserine" evidence="2">
    <location>
        <position position="687"/>
    </location>
</feature>
<feature type="modified residue" description="Phosphothreonine" evidence="3">
    <location>
        <position position="897"/>
    </location>
</feature>
<feature type="modified residue" description="Phosphoserine" evidence="46">
    <location>
        <position position="901"/>
    </location>
</feature>
<feature type="modified residue" description="Phosphoserine" evidence="44 45 46">
    <location>
        <position position="902"/>
    </location>
</feature>
<feature type="modified residue" description="Phosphoserine" evidence="44 45 46">
    <location>
        <position position="904"/>
    </location>
</feature>
<feature type="modified residue" description="Phosphoserine" evidence="2">
    <location>
        <position position="978"/>
    </location>
</feature>
<feature type="modified residue" description="Phosphoserine" evidence="45">
    <location>
        <position position="986"/>
    </location>
</feature>
<feature type="modified residue" description="Phosphoserine" evidence="46">
    <location>
        <position position="995"/>
    </location>
</feature>
<feature type="modified residue" description="Phosphoserine" evidence="45">
    <location>
        <position position="1137"/>
    </location>
</feature>
<feature type="modified residue" description="Phosphothreonine" evidence="46">
    <location>
        <position position="1144"/>
    </location>
</feature>
<feature type="modified residue" description="Phosphoserine" evidence="3">
    <location>
        <position position="1645"/>
    </location>
</feature>
<feature type="splice variant" id="VSP_053317" description="In isoform 10, isoform 11 and isoform 12." evidence="33">
    <location>
        <begin position="116"/>
        <end position="152"/>
    </location>
</feature>
<feature type="splice variant" id="VSP_004293" description="In isoform 3, isoform 5, isoform 6, isoform 7, isoform 8, isoform 9, isoform 10, isoform 12 and isoform 13." evidence="31 32 33 34 37 39">
    <location>
        <begin position="770"/>
        <end position="774"/>
    </location>
</feature>
<feature type="splice variant" id="VSP_047460" description="In isoform 5." evidence="34">
    <original>GEKVEGLQAQALYPWRAKKDNHLNFNKNDVITVLEQQDMWWFGEVQGQKGWFPKSYVKLISGPIRKSTSMDSGSSESPASLKRVASPAAKPVVSGEEFIAMYTYESSEQGDLTFQQ</original>
    <variation>PDFLLHPSMRLGHMQPRIVLLFPDPLQCSTSRLLPMLRPRPGVPFLRSPSCQSPSHPSRPISDAAPSVKFTLMPPGRIHPCFLFIPAVNSRNSFLVYFILPGGTLGCFYLCLPHYL</variation>
    <location>
        <begin position="910"/>
        <end position="1025"/>
    </location>
</feature>
<feature type="splice variant" id="VSP_053318" description="In isoform 13." evidence="40">
    <original>GEKVEGLQAQ</original>
    <variation>HGFWFFRESC</variation>
    <location>
        <begin position="910"/>
        <end position="919"/>
    </location>
</feature>
<feature type="splice variant" id="VSP_053319" description="In isoform 13." evidence="40">
    <location>
        <begin position="920"/>
        <end position="1721"/>
    </location>
</feature>
<feature type="splice variant" id="VSP_004294" description="In isoform 3, isoform 4, isoform 11 and isoform 12." evidence="32 33 37 39">
    <location>
        <begin position="1006"/>
        <end position="1076"/>
    </location>
</feature>
<feature type="splice variant" id="VSP_053320" description="In isoform 6." evidence="33">
    <original>EFIAMYTYESSEQGD</original>
    <variation>GLWNCWENREFRKKT</variation>
    <location>
        <begin position="1006"/>
        <end position="1020"/>
    </location>
</feature>
<feature type="splice variant" id="VSP_053321" description="In isoform 6." evidence="33">
    <location>
        <begin position="1021"/>
        <end position="1721"/>
    </location>
</feature>
<feature type="splice variant" id="VSP_047461" description="In isoform 5." evidence="34">
    <location>
        <begin position="1026"/>
        <end position="1721"/>
    </location>
</feature>
<feature type="splice variant" id="VSP_004295" description="In isoform 2, isoform 3, isoform 7, isoform 10, isoform 11 and isoform 12." evidence="30 31 32 33 37 38 39">
    <location>
        <begin position="1221"/>
        <end position="1721"/>
    </location>
</feature>
<feature type="splice variant" id="VSP_053322" description="In isoform 9." evidence="33">
    <location>
        <begin position="1392"/>
        <end position="1447"/>
    </location>
</feature>
<feature type="sequence variant" id="VAR_070011" description="In dbSNP:rs187895245." evidence="18 29">
    <original>S</original>
    <variation>N</variation>
    <location>
        <position position="1137"/>
    </location>
</feature>
<feature type="mutagenesis site" description="Abolishes interaction with FCHSD2." evidence="27">
    <original>I</original>
    <variation>K</variation>
    <variation>S</variation>
    <location>
        <position position="1078"/>
    </location>
</feature>
<feature type="mutagenesis site" description="Abolishes interaction with FCHSD2." evidence="27">
    <original>R</original>
    <variation>A</variation>
    <variation>E</variation>
    <location>
        <position position="1119"/>
    </location>
</feature>
<feature type="mutagenesis site" description="Decreases specificity for CDC42; when associated with I-1376." evidence="16">
    <original>M</original>
    <variation>L</variation>
    <location>
        <position position="1369"/>
    </location>
</feature>
<feature type="mutagenesis site" description="Decreases specificity for CDC42; when associated with L-1369." evidence="16">
    <original>L</original>
    <variation>I</variation>
    <location>
        <position position="1376"/>
    </location>
</feature>
<feature type="sequence conflict" description="In Ref. 1; AAC78610/AAC78611 and 3; ABG74695/ABG74697/ABG74698." evidence="40" ref="1 3">
    <original>A</original>
    <variation>P</variation>
    <location>
        <position position="114"/>
    </location>
</feature>
<feature type="sequence conflict" description="In Ref. 4; ABD72328." evidence="40" ref="4">
    <original>E</original>
    <variation>G</variation>
    <location>
        <position position="863"/>
    </location>
</feature>
<feature type="sequence conflict" description="In Ref. 9; AAD53183." evidence="40" ref="9">
    <original>T</original>
    <variation>A</variation>
    <location>
        <position position="1088"/>
    </location>
</feature>
<feature type="sequence conflict" description="In Ref. 9; AAD53183." evidence="40" ref="9">
    <original>G</original>
    <variation>R</variation>
    <location>
        <position position="1109"/>
    </location>
</feature>
<feature type="sequence conflict" description="In Ref. 1; AAC78611 and 8; AAC50592." evidence="40" ref="1 8">
    <original>A</original>
    <variation>E</variation>
    <location>
        <position position="1361"/>
    </location>
</feature>
<feature type="sequence conflict" description="In Ref. 7; AAI16187." evidence="40" ref="7">
    <original>K</original>
    <variation>R</variation>
    <location>
        <position position="1367"/>
    </location>
</feature>
<feature type="sequence conflict" description="In Ref. 1; AAC78611 and 8; AAC50592." evidence="40" ref="1 8">
    <original>S</original>
    <variation>N</variation>
    <location>
        <position position="1474"/>
    </location>
</feature>
<feature type="turn" evidence="50">
    <location>
        <begin position="12"/>
        <end position="14"/>
    </location>
</feature>
<feature type="helix" evidence="50">
    <location>
        <begin position="19"/>
        <end position="31"/>
    </location>
</feature>
<feature type="strand" evidence="49">
    <location>
        <begin position="35"/>
        <end position="37"/>
    </location>
</feature>
<feature type="strand" evidence="50">
    <location>
        <begin position="38"/>
        <end position="40"/>
    </location>
</feature>
<feature type="helix" evidence="50">
    <location>
        <begin position="41"/>
        <end position="48"/>
    </location>
</feature>
<feature type="helix" evidence="50">
    <location>
        <begin position="49"/>
        <end position="51"/>
    </location>
</feature>
<feature type="helix" evidence="50">
    <location>
        <begin position="55"/>
        <end position="65"/>
    </location>
</feature>
<feature type="strand" evidence="50">
    <location>
        <begin position="70"/>
        <end position="73"/>
    </location>
</feature>
<feature type="helix" evidence="50">
    <location>
        <begin position="75"/>
        <end position="89"/>
    </location>
</feature>
<feature type="helix" evidence="50">
    <location>
        <begin position="100"/>
        <end position="102"/>
    </location>
</feature>
<feature type="strand" evidence="48">
    <location>
        <begin position="215"/>
        <end position="217"/>
    </location>
</feature>
<feature type="helix" evidence="48">
    <location>
        <begin position="219"/>
        <end position="230"/>
    </location>
</feature>
<feature type="strand" evidence="48">
    <location>
        <begin position="239"/>
        <end position="241"/>
    </location>
</feature>
<feature type="helix" evidence="48">
    <location>
        <begin position="242"/>
        <end position="250"/>
    </location>
</feature>
<feature type="helix" evidence="48">
    <location>
        <begin position="256"/>
        <end position="266"/>
    </location>
</feature>
<feature type="strand" evidence="48">
    <location>
        <begin position="272"/>
        <end position="275"/>
    </location>
</feature>
<feature type="helix" evidence="48">
    <location>
        <begin position="276"/>
        <end position="290"/>
    </location>
</feature>
<feature type="helix" evidence="48">
    <location>
        <begin position="301"/>
        <end position="303"/>
    </location>
</feature>
<feature type="turn" evidence="48">
    <location>
        <begin position="306"/>
        <end position="309"/>
    </location>
</feature>
<feature type="strand" evidence="55">
    <location>
        <begin position="741"/>
        <end position="747"/>
    </location>
</feature>
<feature type="strand" evidence="55">
    <location>
        <begin position="766"/>
        <end position="769"/>
    </location>
</feature>
<feature type="strand" evidence="55">
    <location>
        <begin position="775"/>
        <end position="778"/>
    </location>
</feature>
<feature type="strand" evidence="55">
    <location>
        <begin position="780"/>
        <end position="782"/>
    </location>
</feature>
<feature type="strand" evidence="55">
    <location>
        <begin position="784"/>
        <end position="789"/>
    </location>
</feature>
<feature type="strand" evidence="55">
    <location>
        <begin position="792"/>
        <end position="797"/>
    </location>
</feature>
<feature type="helix" evidence="55">
    <location>
        <begin position="798"/>
        <end position="800"/>
    </location>
</feature>
<feature type="strand" evidence="55">
    <location>
        <begin position="801"/>
        <end position="803"/>
    </location>
</feature>
<feature type="strand" evidence="52">
    <location>
        <begin position="916"/>
        <end position="922"/>
    </location>
</feature>
<feature type="strand" evidence="52">
    <location>
        <begin position="939"/>
        <end position="945"/>
    </location>
</feature>
<feature type="strand" evidence="52">
    <location>
        <begin position="947"/>
        <end position="954"/>
    </location>
</feature>
<feature type="strand" evidence="52">
    <location>
        <begin position="957"/>
        <end position="962"/>
    </location>
</feature>
<feature type="helix" evidence="52">
    <location>
        <begin position="963"/>
        <end position="965"/>
    </location>
</feature>
<feature type="strand" evidence="52">
    <location>
        <begin position="966"/>
        <end position="969"/>
    </location>
</feature>
<feature type="strand" evidence="54">
    <location>
        <begin position="1078"/>
        <end position="1081"/>
    </location>
</feature>
<feature type="strand" evidence="54">
    <location>
        <begin position="1100"/>
        <end position="1106"/>
    </location>
</feature>
<feature type="strand" evidence="54">
    <location>
        <begin position="1110"/>
        <end position="1117"/>
    </location>
</feature>
<feature type="strand" evidence="54">
    <location>
        <begin position="1119"/>
        <end position="1121"/>
    </location>
</feature>
<feature type="strand" evidence="54">
    <location>
        <begin position="1125"/>
        <end position="1129"/>
    </location>
</feature>
<feature type="helix" evidence="54">
    <location>
        <begin position="1130"/>
        <end position="1132"/>
    </location>
</feature>
<feature type="strand" evidence="54">
    <location>
        <begin position="1133"/>
        <end position="1136"/>
    </location>
</feature>
<feature type="helix" evidence="47">
    <location>
        <begin position="1233"/>
        <end position="1262"/>
    </location>
</feature>
<feature type="helix" evidence="47">
    <location>
        <begin position="1264"/>
        <end position="1269"/>
    </location>
</feature>
<feature type="strand" evidence="51">
    <location>
        <begin position="1271"/>
        <end position="1273"/>
    </location>
</feature>
<feature type="helix" evidence="47">
    <location>
        <begin position="1275"/>
        <end position="1282"/>
    </location>
</feature>
<feature type="helix" evidence="47">
    <location>
        <begin position="1285"/>
        <end position="1306"/>
    </location>
</feature>
<feature type="strand" evidence="51">
    <location>
        <begin position="1308"/>
        <end position="1310"/>
    </location>
</feature>
<feature type="helix" evidence="47">
    <location>
        <begin position="1316"/>
        <end position="1322"/>
    </location>
</feature>
<feature type="helix" evidence="47">
    <location>
        <begin position="1323"/>
        <end position="1327"/>
    </location>
</feature>
<feature type="helix" evidence="47">
    <location>
        <begin position="1328"/>
        <end position="1349"/>
    </location>
</feature>
<feature type="helix" evidence="47">
    <location>
        <begin position="1351"/>
        <end position="1361"/>
    </location>
</feature>
<feature type="helix" evidence="47">
    <location>
        <begin position="1364"/>
        <end position="1366"/>
    </location>
</feature>
<feature type="helix" evidence="47">
    <location>
        <begin position="1371"/>
        <end position="1374"/>
    </location>
</feature>
<feature type="helix" evidence="47">
    <location>
        <begin position="1377"/>
        <end position="1393"/>
    </location>
</feature>
<feature type="helix" evidence="47">
    <location>
        <begin position="1403"/>
        <end position="1437"/>
    </location>
</feature>
<feature type="strand" evidence="53">
    <location>
        <begin position="1444"/>
        <end position="1447"/>
    </location>
</feature>
<feature type="strand" evidence="47">
    <location>
        <begin position="1451"/>
        <end position="1454"/>
    </location>
</feature>
<feature type="strand" evidence="47">
    <location>
        <begin position="1456"/>
        <end position="1460"/>
    </location>
</feature>
<feature type="strand" evidence="47">
    <location>
        <begin position="1463"/>
        <end position="1466"/>
    </location>
</feature>
<feature type="strand" evidence="47">
    <location>
        <begin position="1472"/>
        <end position="1474"/>
    </location>
</feature>
<feature type="strand" evidence="47">
    <location>
        <begin position="1479"/>
        <end position="1493"/>
    </location>
</feature>
<feature type="strand" evidence="47">
    <location>
        <begin position="1511"/>
        <end position="1513"/>
    </location>
</feature>
<feature type="helix" evidence="47">
    <location>
        <begin position="1522"/>
        <end position="1524"/>
    </location>
</feature>
<feature type="strand" evidence="47">
    <location>
        <begin position="1525"/>
        <end position="1528"/>
    </location>
</feature>
<feature type="strand" evidence="47">
    <location>
        <begin position="1531"/>
        <end position="1533"/>
    </location>
</feature>
<feature type="strand" evidence="47">
    <location>
        <begin position="1541"/>
        <end position="1544"/>
    </location>
</feature>
<feature type="strand" evidence="47">
    <location>
        <begin position="1547"/>
        <end position="1550"/>
    </location>
</feature>
<feature type="helix" evidence="47">
    <location>
        <begin position="1556"/>
        <end position="1577"/>
    </location>
</feature>